<name>MUTA_HUMAN</name>
<accession>P22033</accession>
<accession>A8K953</accession>
<accession>Q5SYZ3</accession>
<accession>Q96B11</accession>
<accession>Q9UD64</accession>
<protein>
    <recommendedName>
        <fullName evidence="38">Methylmalonyl-CoA mutase, mitochondrial</fullName>
        <shortName>MCM</shortName>
        <ecNumber evidence="5 20 23 24 27 28 29">5.4.99.2</ecNumber>
    </recommendedName>
    <alternativeName>
        <fullName>Methylmalonyl-CoA isomerase</fullName>
    </alternativeName>
</protein>
<organism>
    <name type="scientific">Homo sapiens</name>
    <name type="common">Human</name>
    <dbReference type="NCBI Taxonomy" id="9606"/>
    <lineage>
        <taxon>Eukaryota</taxon>
        <taxon>Metazoa</taxon>
        <taxon>Chordata</taxon>
        <taxon>Craniata</taxon>
        <taxon>Vertebrata</taxon>
        <taxon>Euteleostomi</taxon>
        <taxon>Mammalia</taxon>
        <taxon>Eutheria</taxon>
        <taxon>Euarchontoglires</taxon>
        <taxon>Primates</taxon>
        <taxon>Haplorrhini</taxon>
        <taxon>Catarrhini</taxon>
        <taxon>Hominidae</taxon>
        <taxon>Homo</taxon>
    </lineage>
</organism>
<sequence length="750" mass="83134">MLRAKNQLFLLSPHYLRQVKESSGSRLIQQRLLHQQQPLHPEWAALAKKQLKGKNPEDLIWHTPEGISIKPLYSKRDTMDLPEELPGVKPFTRGPYPTMYTFRPWTIRQYAGFSTVEESNKFYKDNIKAGQQGLSVAFDLATHRGYDSDNPRVRGDVGMAGVAIDTVEDTKILFDGIPLEKMSVSMTMNGAVIPVLANFIVTGEEQGVPKEKLTGTIQNDILKEFMVRNTYIFPPEPSMKIIADIFEYTAKHMPKFNSISISGYHMQEAGADAILELAYTLADGLEYSRTGLQAGLTIDEFAPRLSFFWGIGMNFYMEIAKMRAGRRLWAHLIEKMFQPKNSKSLLLRAHCQTSGWSLTEQDPYNNIVRTAIEAMAAVFGGTQSLHTNSFDEALGLPTVKSARIARNTQIIIQEESGIPKVADPWGGSYMMECLTNDVYDAALKLINEIEEMGGMAKAVAEGIPKLRIEECAARRQARIDSGSEVIVGVNKYQLEKEDAVEVLAIDNTSVRNRQIEKLKKIKSSRDQALAERCLAALTECAASGDGNILALAVDASRARCTVGEITDALKKVFGEHKANDRMVSGAYRQEFGESKEITSAIKRVHKFMEREGRRPRLLVAKMGQDGHDRGAKVIATGFADLGFDVDIGPLFQTPREVAQQAVDADVHAVGISTLAAGHKTLVPELIKELNSLGRPDILVMCGGVIPPQDYEFLFEVGVSNVFGPGTRIPKAAVQVLDDIEKCLEKKQQSV</sequence>
<reference key="1">
    <citation type="journal article" date="1988" name="Proc. Natl. Acad. Sci. U.S.A.">
        <title>Molecular cloning of L-methylmalonyl-CoA mutase: gene transfer and analysis of mut cell lines.</title>
        <authorList>
            <person name="Ledley F.D."/>
            <person name="Lumetta M."/>
            <person name="Nguyen P.N."/>
            <person name="Kolhouse J.F."/>
            <person name="Allen R.H."/>
        </authorList>
    </citation>
    <scope>NUCLEOTIDE SEQUENCE [MRNA]</scope>
    <scope>FUNCTION</scope>
    <scope>CATALYTIC ACTIVITY</scope>
</reference>
<reference key="2">
    <citation type="journal article" date="1989" name="Genomics">
        <title>Cloning of full-length methylmalonyl-CoA mutase from a cDNA library using the polymerase chain reaction.</title>
        <authorList>
            <person name="Jansen R."/>
            <person name="Kalousek F."/>
            <person name="Fenton W.A."/>
            <person name="Rosenberg L.E."/>
            <person name="Ledley F.D."/>
        </authorList>
    </citation>
    <scope>NUCLEOTIDE SEQUENCE [MRNA]</scope>
    <scope>PROTEIN SEQUENCE OF N-TERMINUS</scope>
    <scope>PARTIAL PROTEIN SEQUENCE</scope>
    <scope>VARIANTS HIS-532 AND VAL-671</scope>
    <source>
        <tissue>Liver</tissue>
    </source>
</reference>
<reference key="3">
    <citation type="journal article" date="1990" name="Genomics">
        <title>Structure of the human methylmalonyl-CoA mutase (MUT) locus.</title>
        <authorList>
            <person name="Nham S.U."/>
            <person name="Wilkemeyer M.F."/>
            <person name="Ledley F.D."/>
        </authorList>
    </citation>
    <scope>NUCLEOTIDE SEQUENCE [GENOMIC DNA]</scope>
    <scope>VARIANTS HIS-532 AND VAL-671</scope>
    <scope>VARIANT MAMM THR-505</scope>
</reference>
<reference key="4">
    <citation type="journal article" date="2004" name="Nat. Genet.">
        <title>Complete sequencing and characterization of 21,243 full-length human cDNAs.</title>
        <authorList>
            <person name="Ota T."/>
            <person name="Suzuki Y."/>
            <person name="Nishikawa T."/>
            <person name="Otsuki T."/>
            <person name="Sugiyama T."/>
            <person name="Irie R."/>
            <person name="Wakamatsu A."/>
            <person name="Hayashi K."/>
            <person name="Sato H."/>
            <person name="Nagai K."/>
            <person name="Kimura K."/>
            <person name="Makita H."/>
            <person name="Sekine M."/>
            <person name="Obayashi M."/>
            <person name="Nishi T."/>
            <person name="Shibahara T."/>
            <person name="Tanaka T."/>
            <person name="Ishii S."/>
            <person name="Yamamoto J."/>
            <person name="Saito K."/>
            <person name="Kawai Y."/>
            <person name="Isono Y."/>
            <person name="Nakamura Y."/>
            <person name="Nagahari K."/>
            <person name="Murakami K."/>
            <person name="Yasuda T."/>
            <person name="Iwayanagi T."/>
            <person name="Wagatsuma M."/>
            <person name="Shiratori A."/>
            <person name="Sudo H."/>
            <person name="Hosoiri T."/>
            <person name="Kaku Y."/>
            <person name="Kodaira H."/>
            <person name="Kondo H."/>
            <person name="Sugawara M."/>
            <person name="Takahashi M."/>
            <person name="Kanda K."/>
            <person name="Yokoi T."/>
            <person name="Furuya T."/>
            <person name="Kikkawa E."/>
            <person name="Omura Y."/>
            <person name="Abe K."/>
            <person name="Kamihara K."/>
            <person name="Katsuta N."/>
            <person name="Sato K."/>
            <person name="Tanikawa M."/>
            <person name="Yamazaki M."/>
            <person name="Ninomiya K."/>
            <person name="Ishibashi T."/>
            <person name="Yamashita H."/>
            <person name="Murakawa K."/>
            <person name="Fujimori K."/>
            <person name="Tanai H."/>
            <person name="Kimata M."/>
            <person name="Watanabe M."/>
            <person name="Hiraoka S."/>
            <person name="Chiba Y."/>
            <person name="Ishida S."/>
            <person name="Ono Y."/>
            <person name="Takiguchi S."/>
            <person name="Watanabe S."/>
            <person name="Yosida M."/>
            <person name="Hotuta T."/>
            <person name="Kusano J."/>
            <person name="Kanehori K."/>
            <person name="Takahashi-Fujii A."/>
            <person name="Hara H."/>
            <person name="Tanase T.-O."/>
            <person name="Nomura Y."/>
            <person name="Togiya S."/>
            <person name="Komai F."/>
            <person name="Hara R."/>
            <person name="Takeuchi K."/>
            <person name="Arita M."/>
            <person name="Imose N."/>
            <person name="Musashino K."/>
            <person name="Yuuki H."/>
            <person name="Oshima A."/>
            <person name="Sasaki N."/>
            <person name="Aotsuka S."/>
            <person name="Yoshikawa Y."/>
            <person name="Matsunawa H."/>
            <person name="Ichihara T."/>
            <person name="Shiohata N."/>
            <person name="Sano S."/>
            <person name="Moriya S."/>
            <person name="Momiyama H."/>
            <person name="Satoh N."/>
            <person name="Takami S."/>
            <person name="Terashima Y."/>
            <person name="Suzuki O."/>
            <person name="Nakagawa S."/>
            <person name="Senoh A."/>
            <person name="Mizoguchi H."/>
            <person name="Goto Y."/>
            <person name="Shimizu F."/>
            <person name="Wakebe H."/>
            <person name="Hishigaki H."/>
            <person name="Watanabe T."/>
            <person name="Sugiyama A."/>
            <person name="Takemoto M."/>
            <person name="Kawakami B."/>
            <person name="Yamazaki M."/>
            <person name="Watanabe K."/>
            <person name="Kumagai A."/>
            <person name="Itakura S."/>
            <person name="Fukuzumi Y."/>
            <person name="Fujimori Y."/>
            <person name="Komiyama M."/>
            <person name="Tashiro H."/>
            <person name="Tanigami A."/>
            <person name="Fujiwara T."/>
            <person name="Ono T."/>
            <person name="Yamada K."/>
            <person name="Fujii Y."/>
            <person name="Ozaki K."/>
            <person name="Hirao M."/>
            <person name="Ohmori Y."/>
            <person name="Kawabata A."/>
            <person name="Hikiji T."/>
            <person name="Kobatake N."/>
            <person name="Inagaki H."/>
            <person name="Ikema Y."/>
            <person name="Okamoto S."/>
            <person name="Okitani R."/>
            <person name="Kawakami T."/>
            <person name="Noguchi S."/>
            <person name="Itoh T."/>
            <person name="Shigeta K."/>
            <person name="Senba T."/>
            <person name="Matsumura K."/>
            <person name="Nakajima Y."/>
            <person name="Mizuno T."/>
            <person name="Morinaga M."/>
            <person name="Sasaki M."/>
            <person name="Togashi T."/>
            <person name="Oyama M."/>
            <person name="Hata H."/>
            <person name="Watanabe M."/>
            <person name="Komatsu T."/>
            <person name="Mizushima-Sugano J."/>
            <person name="Satoh T."/>
            <person name="Shirai Y."/>
            <person name="Takahashi Y."/>
            <person name="Nakagawa K."/>
            <person name="Okumura K."/>
            <person name="Nagase T."/>
            <person name="Nomura N."/>
            <person name="Kikuchi H."/>
            <person name="Masuho Y."/>
            <person name="Yamashita R."/>
            <person name="Nakai K."/>
            <person name="Yada T."/>
            <person name="Nakamura Y."/>
            <person name="Ohara O."/>
            <person name="Isogai T."/>
            <person name="Sugano S."/>
        </authorList>
    </citation>
    <scope>NUCLEOTIDE SEQUENCE [LARGE SCALE MRNA]</scope>
    <scope>VARIANT VAL-671</scope>
    <source>
        <tissue>Testis</tissue>
    </source>
</reference>
<reference key="5">
    <citation type="submission" date="2003-05" db="EMBL/GenBank/DDBJ databases">
        <title>Cloning of human full-length CDSs in BD Creator(TM) system donor vector.</title>
        <authorList>
            <person name="Kalnine N."/>
            <person name="Chen X."/>
            <person name="Rolfs A."/>
            <person name="Halleck A."/>
            <person name="Hines L."/>
            <person name="Eisenstein S."/>
            <person name="Koundinya M."/>
            <person name="Raphael J."/>
            <person name="Moreira D."/>
            <person name="Kelley T."/>
            <person name="LaBaer J."/>
            <person name="Lin Y."/>
            <person name="Phelan M."/>
            <person name="Farmer A."/>
        </authorList>
    </citation>
    <scope>NUCLEOTIDE SEQUENCE [LARGE SCALE MRNA]</scope>
    <scope>VARIANTS THR-499 AND VAL-671</scope>
</reference>
<reference key="6">
    <citation type="journal article" date="2003" name="Nature">
        <title>The DNA sequence and analysis of human chromosome 6.</title>
        <authorList>
            <person name="Mungall A.J."/>
            <person name="Palmer S.A."/>
            <person name="Sims S.K."/>
            <person name="Edwards C.A."/>
            <person name="Ashurst J.L."/>
            <person name="Wilming L."/>
            <person name="Jones M.C."/>
            <person name="Horton R."/>
            <person name="Hunt S.E."/>
            <person name="Scott C.E."/>
            <person name="Gilbert J.G.R."/>
            <person name="Clamp M.E."/>
            <person name="Bethel G."/>
            <person name="Milne S."/>
            <person name="Ainscough R."/>
            <person name="Almeida J.P."/>
            <person name="Ambrose K.D."/>
            <person name="Andrews T.D."/>
            <person name="Ashwell R.I.S."/>
            <person name="Babbage A.K."/>
            <person name="Bagguley C.L."/>
            <person name="Bailey J."/>
            <person name="Banerjee R."/>
            <person name="Barker D.J."/>
            <person name="Barlow K.F."/>
            <person name="Bates K."/>
            <person name="Beare D.M."/>
            <person name="Beasley H."/>
            <person name="Beasley O."/>
            <person name="Bird C.P."/>
            <person name="Blakey S.E."/>
            <person name="Bray-Allen S."/>
            <person name="Brook J."/>
            <person name="Brown A.J."/>
            <person name="Brown J.Y."/>
            <person name="Burford D.C."/>
            <person name="Burrill W."/>
            <person name="Burton J."/>
            <person name="Carder C."/>
            <person name="Carter N.P."/>
            <person name="Chapman J.C."/>
            <person name="Clark S.Y."/>
            <person name="Clark G."/>
            <person name="Clee C.M."/>
            <person name="Clegg S."/>
            <person name="Cobley V."/>
            <person name="Collier R.E."/>
            <person name="Collins J.E."/>
            <person name="Colman L.K."/>
            <person name="Corby N.R."/>
            <person name="Coville G.J."/>
            <person name="Culley K.M."/>
            <person name="Dhami P."/>
            <person name="Davies J."/>
            <person name="Dunn M."/>
            <person name="Earthrowl M.E."/>
            <person name="Ellington A.E."/>
            <person name="Evans K.A."/>
            <person name="Faulkner L."/>
            <person name="Francis M.D."/>
            <person name="Frankish A."/>
            <person name="Frankland J."/>
            <person name="French L."/>
            <person name="Garner P."/>
            <person name="Garnett J."/>
            <person name="Ghori M.J."/>
            <person name="Gilby L.M."/>
            <person name="Gillson C.J."/>
            <person name="Glithero R.J."/>
            <person name="Grafham D.V."/>
            <person name="Grant M."/>
            <person name="Gribble S."/>
            <person name="Griffiths C."/>
            <person name="Griffiths M.N.D."/>
            <person name="Hall R."/>
            <person name="Halls K.S."/>
            <person name="Hammond S."/>
            <person name="Harley J.L."/>
            <person name="Hart E.A."/>
            <person name="Heath P.D."/>
            <person name="Heathcott R."/>
            <person name="Holmes S.J."/>
            <person name="Howden P.J."/>
            <person name="Howe K.L."/>
            <person name="Howell G.R."/>
            <person name="Huckle E."/>
            <person name="Humphray S.J."/>
            <person name="Humphries M.D."/>
            <person name="Hunt A.R."/>
            <person name="Johnson C.M."/>
            <person name="Joy A.A."/>
            <person name="Kay M."/>
            <person name="Keenan S.J."/>
            <person name="Kimberley A.M."/>
            <person name="King A."/>
            <person name="Laird G.K."/>
            <person name="Langford C."/>
            <person name="Lawlor S."/>
            <person name="Leongamornlert D.A."/>
            <person name="Leversha M."/>
            <person name="Lloyd C.R."/>
            <person name="Lloyd D.M."/>
            <person name="Loveland J.E."/>
            <person name="Lovell J."/>
            <person name="Martin S."/>
            <person name="Mashreghi-Mohammadi M."/>
            <person name="Maslen G.L."/>
            <person name="Matthews L."/>
            <person name="McCann O.T."/>
            <person name="McLaren S.J."/>
            <person name="McLay K."/>
            <person name="McMurray A."/>
            <person name="Moore M.J.F."/>
            <person name="Mullikin J.C."/>
            <person name="Niblett D."/>
            <person name="Nickerson T."/>
            <person name="Novik K.L."/>
            <person name="Oliver K."/>
            <person name="Overton-Larty E.K."/>
            <person name="Parker A."/>
            <person name="Patel R."/>
            <person name="Pearce A.V."/>
            <person name="Peck A.I."/>
            <person name="Phillimore B.J.C.T."/>
            <person name="Phillips S."/>
            <person name="Plumb R.W."/>
            <person name="Porter K.M."/>
            <person name="Ramsey Y."/>
            <person name="Ranby S.A."/>
            <person name="Rice C.M."/>
            <person name="Ross M.T."/>
            <person name="Searle S.M."/>
            <person name="Sehra H.K."/>
            <person name="Sheridan E."/>
            <person name="Skuce C.D."/>
            <person name="Smith S."/>
            <person name="Smith M."/>
            <person name="Spraggon L."/>
            <person name="Squares S.L."/>
            <person name="Steward C.A."/>
            <person name="Sycamore N."/>
            <person name="Tamlyn-Hall G."/>
            <person name="Tester J."/>
            <person name="Theaker A.J."/>
            <person name="Thomas D.W."/>
            <person name="Thorpe A."/>
            <person name="Tracey A."/>
            <person name="Tromans A."/>
            <person name="Tubby B."/>
            <person name="Wall M."/>
            <person name="Wallis J.M."/>
            <person name="West A.P."/>
            <person name="White S.S."/>
            <person name="Whitehead S.L."/>
            <person name="Whittaker H."/>
            <person name="Wild A."/>
            <person name="Willey D.J."/>
            <person name="Wilmer T.E."/>
            <person name="Wood J.M."/>
            <person name="Wray P.W."/>
            <person name="Wyatt J.C."/>
            <person name="Young L."/>
            <person name="Younger R.M."/>
            <person name="Bentley D.R."/>
            <person name="Coulson A."/>
            <person name="Durbin R.M."/>
            <person name="Hubbard T."/>
            <person name="Sulston J.E."/>
            <person name="Dunham I."/>
            <person name="Rogers J."/>
            <person name="Beck S."/>
        </authorList>
    </citation>
    <scope>NUCLEOTIDE SEQUENCE [LARGE SCALE GENOMIC DNA]</scope>
</reference>
<reference key="7">
    <citation type="journal article" date="2004" name="Genome Res.">
        <title>The status, quality, and expansion of the NIH full-length cDNA project: the Mammalian Gene Collection (MGC).</title>
        <authorList>
            <consortium name="The MGC Project Team"/>
        </authorList>
    </citation>
    <scope>NUCLEOTIDE SEQUENCE [LARGE SCALE MRNA]</scope>
    <scope>VARIANTS THR-499 AND VAL-671</scope>
    <source>
        <tissue>Uterus</tissue>
    </source>
</reference>
<reference key="8">
    <citation type="journal article" date="1975" name="Br. J. Haematol.">
        <title>Intracellular localization of hepatic propionyl-CoA carboxylase and methylmalonyl-CoA mutase in humans and normal and vitamin B12 deficient rats.</title>
        <authorList>
            <person name="Frenkel E.P."/>
            <person name="Kitchens R.L."/>
        </authorList>
    </citation>
    <scope>FUNCTION</scope>
    <scope>CATALYTIC ACTIVITY</scope>
    <scope>SUBCELLULAR LOCATION</scope>
</reference>
<reference key="9">
    <citation type="journal article" date="1990" name="Biochem. J.">
        <title>Primary structure and activity of mouse methylmalonyl-CoA mutase.</title>
        <authorList>
            <person name="Wilkemeyer M.F."/>
            <person name="Crane A.M."/>
            <person name="Ledley F.D."/>
        </authorList>
    </citation>
    <scope>FUNCTION</scope>
    <scope>CATALYTIC ACTIVITY</scope>
    <scope>BIOPHYSICOCHEMICAL PROPERTIES</scope>
    <scope>COFACTOR</scope>
    <source>
        <tissue>Liver</tissue>
    </source>
</reference>
<reference key="10">
    <citation type="journal article" date="2011" name="Biochem. Biophys. Res. Commun.">
        <title>Protection and reactivation of human methylmalonyl-CoA mutase by MMAA protein.</title>
        <authorList>
            <person name="Takahashi-Iniguez T."/>
            <person name="Garcia-Arellano H."/>
            <person name="Trujillo-Roldan M.A."/>
            <person name="Flores M.E."/>
        </authorList>
    </citation>
    <scope>FUNCTION</scope>
    <scope>CATALYTIC ACTIVITY</scope>
    <scope>INTERACTION WITH MMAA</scope>
    <scope>ACTIVITY REGULATION</scope>
    <scope>COFACTOR</scope>
</reference>
<reference key="11">
    <citation type="journal article" date="2014" name="J. Proteomics">
        <title>An enzyme assisted RP-RPLC approach for in-depth analysis of human liver phosphoproteome.</title>
        <authorList>
            <person name="Bian Y."/>
            <person name="Song C."/>
            <person name="Cheng K."/>
            <person name="Dong M."/>
            <person name="Wang F."/>
            <person name="Huang J."/>
            <person name="Sun D."/>
            <person name="Wang L."/>
            <person name="Ye M."/>
            <person name="Zou H."/>
        </authorList>
    </citation>
    <scope>PHOSPHORYLATION [LARGE SCALE ANALYSIS] AT SER-481</scope>
    <scope>IDENTIFICATION BY MASS SPECTROMETRY [LARGE SCALE ANALYSIS]</scope>
    <source>
        <tissue>Liver</tissue>
    </source>
</reference>
<reference key="12">
    <citation type="journal article" date="2015" name="Proteomics">
        <title>N-terminome analysis of the human mitochondrial proteome.</title>
        <authorList>
            <person name="Vaca Jacome A.S."/>
            <person name="Rabilloud T."/>
            <person name="Schaeffer-Reiss C."/>
            <person name="Rompais M."/>
            <person name="Ayoub D."/>
            <person name="Lane L."/>
            <person name="Bairoch A."/>
            <person name="Van Dorsselaer A."/>
            <person name="Carapito C."/>
        </authorList>
    </citation>
    <scope>IDENTIFICATION BY MASS SPECTROMETRY [LARGE SCALE ANALYSIS]</scope>
</reference>
<reference key="13">
    <citation type="journal article" date="2017" name="Biochimie">
        <title>Human MMAA induces the release of inactive cofactor and restores methylmalonyl-CoA mutase activity through their complex formation.</title>
        <authorList>
            <person name="Takahashi-Iniguez T."/>
            <person name="Gonzalez-Noriega A."/>
            <person name="Michalak C."/>
            <person name="Flores M.E."/>
        </authorList>
    </citation>
    <scope>FUNCTION</scope>
    <scope>CATALYTIC ACTIVITY</scope>
    <scope>SUBCELLULAR LOCATION</scope>
    <scope>BIOPHYSICOCHEMICAL PROPERTIES</scope>
    <scope>INTERACTION WITH MMAA</scope>
    <scope>COFACTOR</scope>
    <scope>ACTIVITY REGULATION</scope>
</reference>
<reference key="14">
    <citation type="journal article" date="2017" name="Cell">
        <title>The human knockout gene CLYBL connects itaconate to vitamin B12.</title>
        <authorList>
            <person name="Shen H."/>
            <person name="Campanello G.C."/>
            <person name="Flicker D."/>
            <person name="Grabarek Z."/>
            <person name="Hu J."/>
            <person name="Luo C."/>
            <person name="Banerjee R."/>
            <person name="Mootha V.K."/>
        </authorList>
    </citation>
    <scope>FUNCTION</scope>
    <scope>CATALYTIC ACTIVITY</scope>
    <scope>COFACTOR</scope>
    <scope>ACTIVITY REGULATION</scope>
</reference>
<reference key="15">
    <citation type="journal article" date="2010" name="J. Biol. Chem.">
        <title>Structures of the human GTPase MMAA and vitamin B12-dependent methylmalonyl-CoA mutase and insight into their complex formation.</title>
        <authorList>
            <person name="Froese D.S."/>
            <person name="Kochan G."/>
            <person name="Muniz J.R."/>
            <person name="Wu X."/>
            <person name="Gileadi C."/>
            <person name="Ugochukwu E."/>
            <person name="Krysztofinska E."/>
            <person name="Gravel R.A."/>
            <person name="Oppermann U."/>
            <person name="Yue W.W."/>
        </authorList>
    </citation>
    <scope>X-RAY CRYSTALLOGRAPHY (1.95 ANGSTROMS) OF 12-750 IN COMPLEX WITH ADENOSYLCOBALAMIN AND MALONYL-COA</scope>
    <scope>SUBUNIT</scope>
    <scope>INTERACTION WITH MMAA</scope>
</reference>
<reference key="16">
    <citation type="journal article" date="1990" name="Am. J. Hum. Genet.">
        <title>Heterozygous mutations at the mut locus in fibroblasts with mut0 methylmalonic acidemia identified by polymerase-chain-reaction cDNA cloning.</title>
        <authorList>
            <person name="Jansen R."/>
            <person name="Ledley F.D."/>
        </authorList>
    </citation>
    <scope>VARIANTS MAMM ARG-105 AND GLU-377</scope>
    <scope>INVOLVEMENT IN MAMM</scope>
</reference>
<reference key="17">
    <citation type="journal article" date="1991" name="J. Clin. Invest.">
        <title>Genetic characterization of a MUT locus mutation discriminating heterogeneity in mut0 and mut- methylmalonic aciduria by interallelic complementation.</title>
        <authorList>
            <person name="Raff M.L."/>
            <person name="Crane A.M."/>
            <person name="Jansen R."/>
            <person name="Ledley F.D."/>
            <person name="Rosenblatt D.S."/>
        </authorList>
    </citation>
    <scope>VARIANT MAMM HIS-93</scope>
</reference>
<reference key="18">
    <citation type="journal article" date="1992" name="Hum. Genet.">
        <title>Phenotype of disease in three patients with identical mutations in methylmalonyl CoA mutase.</title>
        <authorList>
            <person name="Crane A.M."/>
            <person name="Martin L.S."/>
            <person name="Valle D."/>
            <person name="Ledley F.D."/>
        </authorList>
    </citation>
    <scope>VARIANT MAMM VAL-717</scope>
    <scope>VARIANT VAL-671</scope>
</reference>
<reference key="19">
    <citation type="journal article" date="1992" name="J. Clin. Invest.">
        <title>Cloning and expression of a mutant methylmalonyl coenzyme A mutase with altered cobalamin affinity that causes mut- methylmalonic aciduria.</title>
        <authorList>
            <person name="Crane A.M."/>
            <person name="Jansen R."/>
            <person name="Andrews E.R."/>
            <person name="Ledley F.D."/>
        </authorList>
    </citation>
    <scope>VARIANT MAMM VAL-717</scope>
    <scope>VARIANT VAL-671</scope>
    <scope>FUNCTION</scope>
    <scope>CATALYTIC ACTIVITY</scope>
</reference>
<reference key="20">
    <citation type="journal article" date="1994" name="Am. J. Hum. Genet.">
        <title>Clustering of mutations in methylmalonyl CoA mutase associated with mut-methylmalonic acidemia.</title>
        <authorList>
            <person name="Crane A.M."/>
            <person name="Ledley F.D."/>
        </authorList>
    </citation>
    <scope>VARIANTS MAMM CYS-626; GLU-630; ASP-648 AND TRP-694</scope>
    <scope>VARIANT HIS-532</scope>
</reference>
<reference key="21">
    <citation type="journal article" date="1994" name="J. Clin. Invest.">
        <title>Cloning and expression of mutations demonstrating intragenic complementation in mut0 methylmalonic aciduria.</title>
        <authorList>
            <person name="Qureshi A.A."/>
            <person name="Crane A.M."/>
            <person name="Matiaszuk N.V."/>
            <person name="Resvani I."/>
            <person name="Ledley F.D."/>
            <person name="Rosenblatt D.S."/>
        </authorList>
    </citation>
    <scope>VARIANTS MAMM ARG-623 AND ARG-703</scope>
</reference>
<reference key="22">
    <citation type="journal article" date="1997" name="Hum. Mol. Genet.">
        <title>Expression and kinetic characterization of methylmalonyl-CoA mutase from patients with the mut- phenotype: evidence for naturally occurring interallelic complementation.</title>
        <authorList>
            <person name="Janata J."/>
            <person name="Kogekar N."/>
            <person name="Fenton W.A."/>
        </authorList>
    </citation>
    <scope>VARIANTS MAMM VAL-94; ASN-231; HIS-369; ARG-623; ARG-678; TRP-694 AND VAL-717</scope>
</reference>
<reference key="23">
    <citation type="journal article" date="1997" name="Hum. Mutat.">
        <title>Mutations in mut methylmalonic acidemia: clinical and enzymatic correlations.</title>
        <authorList>
            <person name="Ledley F.D."/>
            <person name="Rosenblatt D.S."/>
        </authorList>
    </citation>
    <scope>VARIANTS MAMM ASP-368 AND GLU-669</scope>
</reference>
<reference key="24">
    <citation type="journal article" date="1998" name="Hum. Mutat. Suppl.">
        <title>A common mutation among blacks with mut- methylmalonic aciduria.</title>
        <authorList>
            <person name="Adjalla C.E."/>
            <person name="Hosack A.R."/>
            <person name="Matiaszuk N.V."/>
            <person name="Rosenblatt D.S."/>
        </authorList>
    </citation>
    <scope>VARIANT MAMM VAL-717</scope>
    <scope>VARIANT VAL-671</scope>
</reference>
<reference key="25">
    <citation type="journal article" date="1998" name="Hum. Mutat.">
        <title>Seven novel mutations in mut methylmalonic aciduria.</title>
        <authorList>
            <person name="Adjalla C.E."/>
            <person name="Hosack A.R."/>
            <person name="Gilfix B.M."/>
            <person name="Lamothe E."/>
            <person name="Sun S."/>
            <person name="Chan A."/>
            <person name="Evans S."/>
            <person name="Matiaszuk N.V."/>
            <person name="Rosenblatt D.S."/>
        </authorList>
    </citation>
    <scope>VARIANTS MAMM GLU-191; GLN-228; VAL-312; LEU-346 DEL; GLY-633; LEU-684 INS AND ARG-685</scope>
</reference>
<reference key="26">
    <citation type="journal article" date="2000" name="Hum. Mutat.">
        <title>mut0 methylmalonic acidemia: eleven novel mutations of the methylmalonyl CoA mutase including a deletion-insertion mutation.</title>
        <authorList>
            <person name="Fuchshuber A."/>
            <person name="Mucha B."/>
            <person name="Baumgartner E.R."/>
            <person name="Vollmer M."/>
            <person name="Hildebrandt F."/>
        </authorList>
    </citation>
    <scope>VARIANTS MAMM VAL-137; SER-174; ARG-203; HIS-218; PRO-535 AND ARG-627</scope>
</reference>
<reference key="27">
    <citation type="journal article" date="2001" name="Mol. Genet. Metab.">
        <title>Mutation analysis of the MCM gene in Israeli patients with mut(0) disease.</title>
        <authorList>
            <person name="Berger I."/>
            <person name="Shaag A."/>
            <person name="Anikster Y."/>
            <person name="Baumgartner E.R."/>
            <person name="Bar-Meir M."/>
            <person name="Joseph A."/>
            <person name="Elpeleg O.N."/>
        </authorList>
    </citation>
    <scope>VARIANT MAMM TYR-219</scope>
    <scope>VARIANTS THR-499 AND VAL-671</scope>
</reference>
<reference key="28">
    <citation type="journal article" date="2005" name="Hum. Mutat.">
        <title>Molecular basis of methylmalonyl-CoA mutase apoenzyme defect in 40 European patients affected by mut(o) and mut- forms of methylmalonic acidemia: identification of 29 novel mutations in the MUT gene.</title>
        <authorList>
            <person name="Acquaviva C."/>
            <person name="Benoist J.-F."/>
            <person name="Pereira S."/>
            <person name="Callebaut I."/>
            <person name="Koskas T."/>
            <person name="Porquet D."/>
            <person name="Elion J."/>
        </authorList>
    </citation>
    <scope>VARIANTS MAMM HIS-108; LEU-148; ASN-156; VAL-158; GLU-191; ARG-203; SER-215; TYR-219; ASN-262; PRO-293; PHE-328; CYS-587; THR-615; ASN-621; ARG-623; ARG-624; ARG-627; GLU-637; ILE-638; TYR-640; ARG-642; TRP-694 AND LYS-700</scope>
</reference>
<reference key="29">
    <citation type="journal article" date="2005" name="Mol. Genet. Metab.">
        <title>Genetic analysis of three genes causing isolated methylmalonic acidemia: identification of 21 novel allelic variants.</title>
        <authorList>
            <person name="Martinez M.A."/>
            <person name="Rincon A."/>
            <person name="Desviat L.R."/>
            <person name="Merinero B."/>
            <person name="Ugarte M."/>
            <person name="Perez B."/>
        </authorList>
    </citation>
    <scope>VARIANTS MAMM ARG-109; GLU-191; TYR-219; THR-324; PRO-328; CYS-616 AND ARG-617</scope>
    <scope>VARIANT VAL-69</scope>
</reference>
<reference key="30">
    <citation type="journal article" date="2006" name="Hum. Mutat.">
        <title>Spectrum of mutations in mut methylmalonic acidemia and identification of a common Hispanic mutation and haplotype.</title>
        <authorList>
            <person name="Worgan L.C."/>
            <person name="Niles K."/>
            <person name="Tirone J.C."/>
            <person name="Hofmann A."/>
            <person name="Verner A."/>
            <person name="Sammak A."/>
            <person name="Kucic T."/>
            <person name="Lepage P."/>
            <person name="Rosenblatt D.S."/>
        </authorList>
    </citation>
    <scope>VARIANTS MAMM LEU-86; GLU-87; HIS-93; ARG-94; VAL-94; ARG-95; ARG-105; CYS-108; GLY-108; HIS-108; SER-145; SER-174; VAL-186; LYS-189; GLU-191; GLU-197; ARG-203; CYS-215; SER-215; HIS-218; TYR-219; GLN-228; ILE-230; ASN-231; ASN-262; TYR-265; SER-281; GLU-291; SER-305; PHE-306; VAL-312; CYS-316; THR-324; LEU-346 DEL; ARG-347; TYR-350; CYS-369; HIS-369; PRO-370; GLU-377; HIS-383; PRO-383; ARG-386; ASN-386; HIS-388; SER-389 DEL; ILE-412 DEL; ARG-426; ASP-427; PRO-518; TYR-560; ARG-566; SER-573; ARG-615; CYS-616; ARG-623; GLU-630; GLY-633; ARG-637; ARG-642; ARG-678; ARG-685; TRP-694; LYS-700; ARG-703 AND VAL-717</scope>
    <scope>VARIANTS VAL-69; THR-499; HIS-532 AND VAL-671</scope>
</reference>
<reference key="31">
    <citation type="journal article" date="2007" name="Mol. Genet. Metab.">
        <title>Mutation and biochemical analysis of 19 probands with mut0 and 13 with mut- methylmalonic aciduria: identification of seven novel mutations.</title>
        <authorList>
            <person name="Lempp T.J."/>
            <person name="Suormala T."/>
            <person name="Siegenthaler R."/>
            <person name="Baumgartner E.R."/>
            <person name="Fowler B."/>
            <person name="Steinmann B."/>
            <person name="Baumgartner M.R."/>
        </authorList>
    </citation>
    <scope>VARIANTS MAMM CYS-100; HIS-108; VAL-137; TYR-143; LEU-148; GLU-191; ARG-203; HIS-218; TYR-219; ASN-231; PRO-288; PHE-328; PHE-344; SER-366; HIS-369; GLU-454; THR-615; GLU-630; GLY-633; LEU-694; TRP-694 AND LYS-700</scope>
</reference>
<reference key="32">
    <citation type="journal article" date="2008" name="J. Inherit. Metab. Dis.">
        <title>Methylmalonic acidaemia: examination of genotype and biochemical data in 32 patients belonging to mut, cblA or cblB complementation group.</title>
        <authorList>
            <person name="Merinero B."/>
            <person name="Perez B."/>
            <person name="Perez-Cerda C."/>
            <person name="Rincon A."/>
            <person name="Desviat L.R."/>
            <person name="Martinez M.A."/>
            <person name="Sala P.R."/>
            <person name="Garcia M.J."/>
            <person name="Aldamiz-Echevarria L."/>
            <person name="Campos J."/>
            <person name="Cornejo V."/>
            <person name="Del Toro M."/>
            <person name="Mahfoud A."/>
            <person name="Martinez-Pardo M."/>
            <person name="Parini R."/>
            <person name="Pedron C."/>
            <person name="Pena-Quintana L."/>
            <person name="Perez M."/>
            <person name="Pourfarzam M."/>
            <person name="Ugarte M."/>
        </authorList>
    </citation>
    <scope>VARIANTS MAMM 7-GLN--VAL-750 DEL; VAL-69; ARG-109; 152-ARG--VAL-750 DEL; GLU-191; ARG-203; TYR-219; 228-ARG--VAL-750 DEL; ASN-231; THR-324; PRO-328; PRO-358; CYS-369; CYS-616; ARG-617 AND TRP-694</scope>
</reference>
<reference key="33">
    <citation type="journal article" date="2009" name="J. Inherit. Metab. Dis.">
        <title>Insulin-resistant hyperglycaemia complicating neonatal onset of methylmalonic and propionic acidaemias.</title>
        <authorList>
            <person name="Filippi L."/>
            <person name="Gozzini E."/>
            <person name="Cavicchi C."/>
            <person name="Morrone A."/>
            <person name="Fiorini P."/>
            <person name="Donzelli G."/>
            <person name="Malvagia S."/>
            <person name="la Marca G."/>
        </authorList>
    </citation>
    <scope>VARIANT MAMM ARG-161</scope>
</reference>
<reference key="34">
    <citation type="journal article" date="2011" name="BMC Syst. Biol.">
        <title>Initial characterization of the human central proteome.</title>
        <authorList>
            <person name="Burkard T.R."/>
            <person name="Planyavsky M."/>
            <person name="Kaupe I."/>
            <person name="Breitwieser F.P."/>
            <person name="Buerckstuemmer T."/>
            <person name="Bennett K.L."/>
            <person name="Superti-Furga G."/>
            <person name="Colinge J."/>
        </authorList>
    </citation>
    <scope>VARIANT [LARGE SCALE ANALYSIS] VAL-671</scope>
    <scope>IDENTIFICATION BY MASS SPECTROMETRY [LARGE SCALE ANALYSIS]</scope>
</reference>
<reference key="35">
    <citation type="journal article" date="2012" name="Mol. Genet. Metab.">
        <title>Microarray based mutational analysis of patients with methylmalonic acidemia: identification of 10 no vel mutations.</title>
        <authorList>
            <person name="Duendar H."/>
            <person name="Oezguel R.K."/>
            <person name="Guezel-Ozantuerk A."/>
            <person name="Dursun A."/>
            <person name="Sivri S."/>
            <person name="Aliefendioglu D."/>
            <person name="Coskun T."/>
            <person name="Tokatli A."/>
        </authorList>
    </citation>
    <scope>VARIANTS MAMM GLY-137; TYR-219; SER-305; PHE-328; ILE-387; GLU-454; GLU-514; LEU-615; THR-615; VAL-625 AND PHE-674</scope>
    <scope>VARIANTS THR-499; HIS-532 AND VAL-671</scope>
</reference>
<reference key="36">
    <citation type="journal article" date="2014" name="Hum. Mutat.">
        <title>Functional characterization and categorization of missense mutations that cause methylmalonyl-CoA mutase (MUT) deficiency.</title>
        <authorList>
            <person name="Forny P."/>
            <person name="Froese D.S."/>
            <person name="Suormala T."/>
            <person name="Yue W.W."/>
            <person name="Baumgartner M.R."/>
        </authorList>
    </citation>
    <scope>CHARACTERIZATION OF VARIANTS MAMM LEU-86; CYS-100; GLU-191; HIS-218; TYR-219; ASN-231; CYS-316; PHE-328; PHE-344; SER-366; HIS-369; ILE-387; ARG-426; SER-573; LEU-615; THR-615; GLY-633; ASP-648; LEU-694; TRP-694; LYS-700; VAL-717 AND PHE-736</scope>
    <scope>FUNCTION</scope>
    <scope>CATALYTIC ACTIVITY</scope>
    <scope>BIOPHYSICOCHEMICAL PROPERTIES</scope>
</reference>
<reference key="37">
    <citation type="journal article" date="2016" name="Hum. Mutat.">
        <title>Molecular genetic characterization of 151 mut-type methylmalonic aciduria patients and identification of 41 novel mutations in MUT.</title>
        <authorList>
            <person name="Forny P."/>
            <person name="Schnellmann A.S."/>
            <person name="Buerer C."/>
            <person name="Lutz S."/>
            <person name="Fowler B."/>
            <person name="Froese D.S."/>
            <person name="Baumgartner M.R."/>
        </authorList>
    </citation>
    <scope>VARIANTS MAMM LYS-126; ARG-133; ASN-139; VAL-156; ARG-161; SER-187; ILE-189; GLU-205 DEL; ARG-230; ASP-276; ARG-284; GLU-284; ASP-325; LYS-326; LYS-388; LEU-424; GLU-426; VAL-552; PRO-618 AND GLY-625</scope>
    <scope>CHARACTERIZATION OF VARIANTS MAMM HIS-93; ARG-133; ARG-161; ILE-189; GLU-191; ARG-203; ARG-230; PRO-288; SER-305; GLU-377; LYS-388; LEU-424; GLU-426; LEU-615; THR-615; ARG-624; VAL-625; GLY-625; PHE-674 AND TRP-694</scope>
    <scope>FUNCTION</scope>
    <scope>CATALYTIC ACTIVITY</scope>
</reference>
<reference key="38">
    <citation type="journal article" date="2016" name="JIMD Rep.">
        <title>Spectrum of mutations in 60 Saudi patients with Mut methylmalonic acidemia.</title>
        <authorList>
            <person name="Imtiaz F."/>
            <person name="Al-Mubarak B.M."/>
            <person name="Al-Mostafa A."/>
            <person name="Al-Hamed M."/>
            <person name="Allam R."/>
            <person name="Al-Hassnan Z."/>
            <person name="Al-Owain M."/>
            <person name="Al-Zaidan H."/>
            <person name="Rahbeeni Z."/>
            <person name="Qari A."/>
            <person name="Faqeih E.A."/>
            <person name="Alasmari A."/>
            <person name="Al-Mutairi F."/>
            <person name="Alfadhel M."/>
            <person name="Eyaid W.M."/>
            <person name="Rashed M.S."/>
            <person name="Al-Sayed M."/>
        </authorList>
    </citation>
    <scope>VARIANTS MAMM HIS-93; CYS-108; CYS-110; SER-174; SER-215; SER-364; ILE-387; PRO-692 AND TRP-694</scope>
</reference>
<reference key="39">
    <citation type="journal article" date="2017" name="World J. Pediatr.">
        <title>Eight novel MUT loss-of-function missense mutations in Chinese patients with isolated methylmalonic academia.</title>
        <authorList>
            <person name="Han L.S."/>
            <person name="Huang Z."/>
            <person name="Han F."/>
            <person name="Wang Y."/>
            <person name="Gong Z.W."/>
            <person name="Gu X.F."/>
        </authorList>
    </citation>
    <scope>VARIANTS MAMM PRO-140; THR-141; VAL-161; GLY-309; THR-505; LYS-514; ARG-597 AND ASP-723</scope>
    <scope>CHARACTERIZATION OF VARIANTS MAMM PRO-140; THR-141; VAL-161; GLY-309; THR-505; LYS-514; ARG-597 AND ASP-723</scope>
    <scope>FUNCTION</scope>
    <scope>CATALYTIC ACTIVITY</scope>
</reference>
<feature type="transit peptide" description="Mitochondrion" evidence="25">
    <location>
        <begin position="1"/>
        <end position="32"/>
    </location>
</feature>
<feature type="chain" id="PRO_0000019293" description="Methylmalonyl-CoA mutase, mitochondrial">
    <location>
        <begin position="33"/>
        <end position="750"/>
    </location>
</feature>
<feature type="domain" description="B12-binding" evidence="2">
    <location>
        <begin position="614"/>
        <end position="746"/>
    </location>
</feature>
<feature type="binding site" evidence="19">
    <location>
        <position position="50"/>
    </location>
    <ligand>
        <name>malonyl-CoA</name>
        <dbReference type="ChEBI" id="CHEBI:57384"/>
    </ligand>
</feature>
<feature type="binding site" evidence="19">
    <location>
        <begin position="96"/>
        <end position="99"/>
    </location>
    <ligand>
        <name>malonyl-CoA</name>
        <dbReference type="ChEBI" id="CHEBI:57384"/>
    </ligand>
</feature>
<feature type="binding site" evidence="19">
    <location>
        <begin position="106"/>
        <end position="110"/>
    </location>
    <ligand>
        <name>malonyl-CoA</name>
        <dbReference type="ChEBI" id="CHEBI:57384"/>
    </ligand>
</feature>
<feature type="binding site" evidence="19">
    <location>
        <begin position="216"/>
        <end position="218"/>
    </location>
    <ligand>
        <name>malonyl-CoA</name>
        <dbReference type="ChEBI" id="CHEBI:57384"/>
    </ligand>
</feature>
<feature type="binding site" evidence="19">
    <location>
        <position position="228"/>
    </location>
    <ligand>
        <name>malonyl-CoA</name>
        <dbReference type="ChEBI" id="CHEBI:57384"/>
    </ligand>
</feature>
<feature type="binding site" evidence="19">
    <location>
        <position position="255"/>
    </location>
    <ligand>
        <name>malonyl-CoA</name>
        <dbReference type="ChEBI" id="CHEBI:57384"/>
    </ligand>
</feature>
<feature type="binding site" evidence="19">
    <location>
        <position position="265"/>
    </location>
    <ligand>
        <name>malonyl-CoA</name>
        <dbReference type="ChEBI" id="CHEBI:57384"/>
    </ligand>
</feature>
<feature type="binding site" evidence="19">
    <location>
        <begin position="304"/>
        <end position="306"/>
    </location>
    <ligand>
        <name>malonyl-CoA</name>
        <dbReference type="ChEBI" id="CHEBI:57384"/>
    </ligand>
</feature>
<feature type="binding site" description="axial binding residue" evidence="19">
    <location>
        <position position="627"/>
    </location>
    <ligand>
        <name>adenosylcob(III)alamin</name>
        <dbReference type="ChEBI" id="CHEBI:18408"/>
    </ligand>
    <ligandPart>
        <name>Co</name>
        <dbReference type="ChEBI" id="CHEBI:27638"/>
    </ligandPart>
</feature>
<feature type="modified residue" description="N6-acetyllysine" evidence="1">
    <location>
        <position position="89"/>
    </location>
</feature>
<feature type="modified residue" description="N6-acetyllysine" evidence="1">
    <location>
        <position position="212"/>
    </location>
</feature>
<feature type="modified residue" description="N6-acetyllysine" evidence="1">
    <location>
        <position position="335"/>
    </location>
</feature>
<feature type="modified residue" description="N6-succinyllysine" evidence="1">
    <location>
        <position position="343"/>
    </location>
</feature>
<feature type="modified residue" description="Phosphoserine" evidence="42">
    <location>
        <position position="481"/>
    </location>
</feature>
<feature type="modified residue" description="N6-succinyllysine" evidence="1">
    <location>
        <position position="595"/>
    </location>
</feature>
<feature type="modified residue" description="N6-acetyllysine" evidence="1">
    <location>
        <position position="602"/>
    </location>
</feature>
<feature type="sequence variant" id="VAR_080031" description="In MAMM; mut-." evidence="14">
    <location>
        <begin position="7"/>
        <end position="750"/>
    </location>
</feature>
<feature type="sequence variant" id="VAR_023472" description="In MAMM; likely benign; dbSNP:rs115923556." evidence="10 11 14">
    <original>I</original>
    <variation>V</variation>
    <location>
        <position position="69"/>
    </location>
</feature>
<feature type="sequence variant" id="VAR_026592" description="In MAMM; mut0 and mut-; no effect on protein abundance; decreased methylmalonyl-CoA mutase activity; decreased affinity for adenosylcob(III)alamin; alters thermodynamic stability; dbSNP:rs769348060." evidence="11 24">
    <original>P</original>
    <variation>L</variation>
    <location>
        <position position="86"/>
    </location>
</feature>
<feature type="sequence variant" id="VAR_026593" description="In MAMM; mut0; dbSNP:rs1554160986." evidence="11">
    <original>G</original>
    <variation>E</variation>
    <location>
        <position position="87"/>
    </location>
</feature>
<feature type="sequence variant" id="VAR_004409" description="In MAMM; mut0; decreased methylmalonyl-CoA mutase activity; dbSNP:rs121918251." evidence="11 12 26 27">
    <original>R</original>
    <variation>H</variation>
    <location>
        <position position="93"/>
    </location>
</feature>
<feature type="sequence variant" id="VAR_026594" description="In MAMM; mut0; dbSNP:rs727504022." evidence="11">
    <original>G</original>
    <variation>R</variation>
    <location>
        <position position="94"/>
    </location>
</feature>
<feature type="sequence variant" id="VAR_022393" description="In MAMM; mut- and mut0; dbSNP:rs535411418." evidence="11 34">
    <original>G</original>
    <variation>V</variation>
    <location>
        <position position="94"/>
    </location>
</feature>
<feature type="sequence variant" id="VAR_026595" description="In MAMM; mut0; dbSNP:rs190834116." evidence="11">
    <original>P</original>
    <variation>R</variation>
    <location>
        <position position="95"/>
    </location>
</feature>
<feature type="sequence variant" id="VAR_075379" description="In MAMM; mut-; no effect on protein abundance; decreased methylmalonyl-CoA mutase activity; decreased affinity for adenosylcob(III)alamin; alters thermodynamic stability; dbSNP:rs864309735." evidence="13 24">
    <original>Y</original>
    <variation>C</variation>
    <location>
        <position position="100"/>
    </location>
</feature>
<feature type="sequence variant" id="VAR_004410" description="In MAMM; mut0; dbSNP:rs121918249." evidence="11 16">
    <original>W</original>
    <variation>R</variation>
    <location>
        <position position="105"/>
    </location>
</feature>
<feature type="sequence variant" id="VAR_026596" description="In MAMM; mut0; dbSNP:rs121918257." evidence="11 26">
    <original>R</original>
    <variation>C</variation>
    <location>
        <position position="108"/>
    </location>
</feature>
<feature type="sequence variant" id="VAR_026597" description="In MAMM; mut-; dbSNP:rs121918257." evidence="11">
    <original>R</original>
    <variation>G</variation>
    <location>
        <position position="108"/>
    </location>
</feature>
<feature type="sequence variant" id="VAR_022394" description="In MAMM; mut0; dbSNP:rs483352778." evidence="9 11 13">
    <original>R</original>
    <variation>H</variation>
    <location>
        <position position="108"/>
    </location>
</feature>
<feature type="sequence variant" id="VAR_023473" description="In MAMM; mut0; dbSNP:rs1461110052." evidence="10 14">
    <original>Q</original>
    <variation>R</variation>
    <location>
        <position position="109"/>
    </location>
</feature>
<feature type="sequence variant" id="VAR_075380" description="In MAMM; dbSNP:rs796052005." evidence="26">
    <original>Y</original>
    <variation>C</variation>
    <location>
        <position position="110"/>
    </location>
</feature>
<feature type="sequence variant" id="VAR_077210" description="In MAMM; dbSNP:rs879253827." evidence="27">
    <original>N</original>
    <variation>K</variation>
    <location>
        <position position="126"/>
    </location>
</feature>
<feature type="sequence variant" id="VAR_077211" description="In MAMM; mut0; decreased protein abundance; decreased methylmalonyl-CoA mutase activity; dbSNP:rs879253828." evidence="27">
    <original>G</original>
    <variation>R</variation>
    <location>
        <position position="133"/>
    </location>
</feature>
<feature type="sequence variant" id="VAR_075381" description="In MAMM; dbSNP:rs941483851." evidence="21">
    <original>A</original>
    <variation>G</variation>
    <location>
        <position position="137"/>
    </location>
</feature>
<feature type="sequence variant" id="VAR_022395" description="In MAMM; mut0; dbSNP:rs941483851." evidence="3 13">
    <original>A</original>
    <variation>V</variation>
    <location>
        <position position="137"/>
    </location>
</feature>
<feature type="sequence variant" id="VAR_077212" description="In MAMM; uncertain significance; dbSNP:rs879253829." evidence="27">
    <original>D</original>
    <variation>N</variation>
    <location>
        <position position="139"/>
    </location>
</feature>
<feature type="sequence variant" id="VAR_078342" description="In MAMM; decreased protein expression; decreased methylmalonyl-CoA mutase activity." evidence="18 28">
    <original>L</original>
    <variation>P</variation>
    <location>
        <position position="140"/>
    </location>
</feature>
<feature type="sequence variant" id="VAR_078343" description="In MAMM; decreased protein expression; dbSNP:rs1554160730." evidence="28">
    <original>A</original>
    <variation>T</variation>
    <location>
        <position position="141"/>
    </location>
</feature>
<feature type="sequence variant" id="VAR_075382" description="In MAMM; mut0." evidence="13">
    <original>H</original>
    <variation>Y</variation>
    <location>
        <position position="143"/>
    </location>
</feature>
<feature type="sequence variant" id="VAR_026598" description="In MAMM; mut0; dbSNP:rs1237080100." evidence="11">
    <original>G</original>
    <variation>S</variation>
    <location>
        <position position="145"/>
    </location>
</feature>
<feature type="sequence variant" id="VAR_022396" description="In MAMM; mut0; dbSNP:rs1300547552." evidence="9 13">
    <original>S</original>
    <variation>L</variation>
    <location>
        <position position="148"/>
    </location>
</feature>
<feature type="sequence variant" id="VAR_080032" description="In MAMM; mut0." evidence="14">
    <location>
        <begin position="152"/>
        <end position="750"/>
    </location>
</feature>
<feature type="sequence variant" id="VAR_022397" description="In MAMM; mut-." evidence="9">
    <original>D</original>
    <variation>N</variation>
    <location>
        <position position="156"/>
    </location>
</feature>
<feature type="sequence variant" id="VAR_077213" description="In MAMM; dbSNP:rs757000253." evidence="27">
    <original>D</original>
    <variation>V</variation>
    <location>
        <position position="156"/>
    </location>
</feature>
<feature type="sequence variant" id="VAR_022398" description="In MAMM; mut0." evidence="9">
    <original>G</original>
    <variation>V</variation>
    <location>
        <position position="158"/>
    </location>
</feature>
<feature type="sequence variant" id="VAR_077214" description="In MAMM; mut0; decreased protein abundance; decreased methylmalonyl-CoA mutase activity; dbSNP:rs2127420039." evidence="15 27">
    <original>G</original>
    <variation>R</variation>
    <location>
        <position position="161"/>
    </location>
</feature>
<feature type="sequence variant" id="VAR_078344" description="In MAMM; decreased protein expression." evidence="28">
    <original>G</original>
    <variation>V</variation>
    <location>
        <position position="161"/>
    </location>
</feature>
<feature type="sequence variant" id="VAR_022399" description="In MAMM; mut0; dbSNP:rs864309733." evidence="3 11 26">
    <original>F</original>
    <variation>S</variation>
    <location>
        <position position="174"/>
    </location>
</feature>
<feature type="sequence variant" id="VAR_026599" description="In MAMM; mut-; dbSNP:rs148331800." evidence="11">
    <original>M</original>
    <variation>V</variation>
    <location>
        <position position="186"/>
    </location>
</feature>
<feature type="sequence variant" id="VAR_077215" description="In MAMM; mut0; dbSNP:rs879253830." evidence="27">
    <original>T</original>
    <variation>S</variation>
    <location>
        <position position="187"/>
    </location>
</feature>
<feature type="sequence variant" id="VAR_077216" description="In MAMM; mut-; decreased protein abundance; decreased methylmalonyl-CoA mutase activity; dbSNP:rs200908035." evidence="27">
    <original>N</original>
    <variation>I</variation>
    <location>
        <position position="189"/>
    </location>
</feature>
<feature type="sequence variant" id="VAR_026600" description="In MAMM; mut-; dbSNP:rs1561959114." evidence="11">
    <original>N</original>
    <variation>K</variation>
    <location>
        <position position="189"/>
    </location>
</feature>
<feature type="sequence variant" id="VAR_004411" description="In MAMM; mut- and mut0; affects proper folding; reduced protein level; decreased methylmalonyl-CoA mutase activity; dbSNP:rs760782399." evidence="9 10 11 13 14 24 27 36">
    <original>A</original>
    <variation>E</variation>
    <location>
        <position position="191"/>
    </location>
</feature>
<feature type="sequence variant" id="VAR_026601" description="In MAMM; mut0." evidence="11">
    <original>A</original>
    <variation>E</variation>
    <location>
        <position position="197"/>
    </location>
</feature>
<feature type="sequence variant" id="VAR_022400" description="In MAMM; mut0; decreased protein abundance; decreased methylmalonyl-CoA mutase activity; dbSNP:rs778702777." evidence="3 9 11 13 14 27">
    <original>G</original>
    <variation>R</variation>
    <location>
        <position position="203"/>
    </location>
</feature>
<feature type="sequence variant" id="VAR_077217" description="In MAMM; mut0; dbSNP:rs879253831." evidence="27">
    <location>
        <position position="205"/>
    </location>
</feature>
<feature type="sequence variant" id="VAR_026602" description="In MAMM; mut- and mut0; dbSNP:rs121918258." evidence="11">
    <original>G</original>
    <variation>C</variation>
    <location>
        <position position="215"/>
    </location>
</feature>
<feature type="sequence variant" id="VAR_022401" description="In MAMM; mut0; dbSNP:rs121918258." evidence="9 11 26">
    <original>G</original>
    <variation>S</variation>
    <location>
        <position position="215"/>
    </location>
</feature>
<feature type="sequence variant" id="VAR_022402" description="In MAMM; mut0 and mut-; no effect on protein abundance; loss of methylmalonyl-CoA mutase activity; alters thermodynamic stability; dbSNP:rs1446389693." evidence="3 11 13 24">
    <original>Q</original>
    <variation>H</variation>
    <location>
        <position position="218"/>
    </location>
</feature>
<feature type="sequence variant" id="VAR_022403" description="In MAMM; mut0; no effect on protein abundance; loss of methylmalonyl-CoA mutase activity; dbSNP:rs121918256." evidence="4 9 10 11 13 14 21 24">
    <original>N</original>
    <variation>Y</variation>
    <location>
        <position position="219"/>
    </location>
</feature>
<feature type="sequence variant" id="VAR_080033" description="In MAMM; mut0." evidence="14">
    <location>
        <begin position="228"/>
        <end position="750"/>
    </location>
</feature>
<feature type="sequence variant" id="VAR_004412" description="In MAMM; mut0; dbSNP:rs770810987." evidence="11 36">
    <original>R</original>
    <variation>Q</variation>
    <location>
        <position position="228"/>
    </location>
</feature>
<feature type="sequence variant" id="VAR_026603" description="In MAMM; mut-; dbSNP:rs879253833." evidence="11">
    <original>T</original>
    <variation>I</variation>
    <location>
        <position position="230"/>
    </location>
</feature>
<feature type="sequence variant" id="VAR_077218" description="In MAMM; mut0; decreased protein abundance; decreased methylmalonyl-CoA mutase activity; dbSNP:rs879253833." evidence="27">
    <original>T</original>
    <variation>R</variation>
    <location>
        <position position="230"/>
    </location>
</feature>
<feature type="sequence variant" id="VAR_004413" description="In MAMM; mut-; no effect on protein abundance; decreased methylmalonyl-CoA mutase activity; strong decreased affinity for adenosylcob(III)alamin; alters thermodynamic stability; dbSNP:rs864309736." evidence="11 13 14 24 34">
    <original>Y</original>
    <variation>N</variation>
    <location>
        <position position="231"/>
    </location>
</feature>
<feature type="sequence variant" id="VAR_022404" description="In MAMM; mut0; dbSNP:rs1767683356." evidence="9 11">
    <original>S</original>
    <variation>N</variation>
    <location>
        <position position="262"/>
    </location>
</feature>
<feature type="sequence variant" id="VAR_026604" description="In MAMM; mut-." evidence="11">
    <original>H</original>
    <variation>Y</variation>
    <location>
        <position position="265"/>
    </location>
</feature>
<feature type="sequence variant" id="VAR_077219" description="In MAMM; uncertain significance; mut-; dbSNP:rs12175488." evidence="27">
    <original>E</original>
    <variation>D</variation>
    <location>
        <position position="276"/>
    </location>
</feature>
<feature type="sequence variant" id="VAR_026605" description="In MAMM; mut0; dbSNP:rs796052007." evidence="11">
    <original>L</original>
    <variation>S</variation>
    <location>
        <position position="281"/>
    </location>
</feature>
<feature type="sequence variant" id="VAR_077220" description="In MAMM; mut0; dbSNP:rs879253835." evidence="27">
    <original>G</original>
    <variation>E</variation>
    <location>
        <position position="284"/>
    </location>
</feature>
<feature type="sequence variant" id="VAR_077221" description="In MAMM; mut0; dbSNP:rs761477436." evidence="27">
    <original>G</original>
    <variation>R</variation>
    <location>
        <position position="284"/>
    </location>
</feature>
<feature type="sequence variant" id="VAR_075383" description="In MAMM; mut0; decreased protein abundance; decreased methylmalonyl-CoA mutase activity; dbSNP:rs1179778233." evidence="13 27">
    <original>S</original>
    <variation>P</variation>
    <location>
        <position position="288"/>
    </location>
</feature>
<feature type="sequence variant" id="VAR_026606" description="In MAMM; mut0." evidence="11">
    <original>G</original>
    <variation>E</variation>
    <location>
        <position position="291"/>
    </location>
</feature>
<feature type="sequence variant" id="VAR_022405" description="In MAMM; mut0; dbSNP:rs138374956." evidence="9">
    <original>Q</original>
    <variation>P</variation>
    <location>
        <position position="293"/>
    </location>
</feature>
<feature type="sequence variant" id="VAR_026607" description="In MAMM; mut0; decreased protein abundance; decreased methylmalonyl-CoA mutase activity; dbSNP:rs1554160246." evidence="11 21 27">
    <original>L</original>
    <variation>S</variation>
    <location>
        <position position="305"/>
    </location>
</feature>
<feature type="sequence variant" id="VAR_026608" description="In MAMM; mut0; dbSNP:rs1085307929." evidence="11">
    <original>S</original>
    <variation>F</variation>
    <location>
        <position position="306"/>
    </location>
</feature>
<feature type="sequence variant" id="VAR_078345" description="In MAMM; decreased protein expression; dbSNP:rs2127418704." evidence="28">
    <original>W</original>
    <variation>G</variation>
    <location>
        <position position="309"/>
    </location>
</feature>
<feature type="sequence variant" id="VAR_004414" description="In MAMM; mut0; dbSNP:rs864309734." evidence="11 36">
    <original>G</original>
    <variation>V</variation>
    <location>
        <position position="312"/>
    </location>
</feature>
<feature type="sequence variant" id="VAR_026609" description="In MAMM; mut-; no effect on protein abundance; decreased methylmalonyl-CoA mutase activity; no decreased affinity for adenosylcob(III)alamin; dbSNP:rs781474200." evidence="11 24">
    <original>Y</original>
    <variation>C</variation>
    <location>
        <position position="316"/>
    </location>
</feature>
<feature type="sequence variant" id="VAR_023474" description="In MAMM; mut-; dbSNP:rs780387525." evidence="10 11 14">
    <original>A</original>
    <variation>T</variation>
    <location>
        <position position="324"/>
    </location>
</feature>
<feature type="sequence variant" id="VAR_077222" description="In MAMM; dbSNP:rs879253837." evidence="27">
    <original>G</original>
    <variation>D</variation>
    <location>
        <position position="325"/>
    </location>
</feature>
<feature type="sequence variant" id="VAR_077223" description="In MAMM; uncertain significance; dbSNP:rs758577372." evidence="27">
    <original>R</original>
    <variation>K</variation>
    <location>
        <position position="326"/>
    </location>
</feature>
<feature type="sequence variant" id="VAR_022406" description="In MAMM; mut0; affects proper folding; no effect on protein abundance; loss of methylmalonyl-CoA mutase activity; dbSNP:rs796052002." evidence="9 13 21 24">
    <original>L</original>
    <variation>F</variation>
    <location>
        <position position="328"/>
    </location>
</feature>
<feature type="sequence variant" id="VAR_023475" description="In MAMM; mut0; dbSNP:rs965316043." evidence="10 14">
    <original>L</original>
    <variation>P</variation>
    <location>
        <position position="328"/>
    </location>
</feature>
<feature type="sequence variant" id="VAR_075384" description="In MAMM; mut-; affects proper folding; no effect on protein abundance; loss of methylmalonyl-CoA mutase activity; decreased affinity for adenosylcob(III)alamin." evidence="13 24">
    <original>S</original>
    <variation>F</variation>
    <location>
        <position position="344"/>
    </location>
</feature>
<feature type="sequence variant" id="VAR_004415" description="In MAMM; mut0." evidence="11 36">
    <location>
        <position position="346"/>
    </location>
</feature>
<feature type="sequence variant" id="VAR_026610" description="In MAMM; mut0; dbSNP:rs1026703654." evidence="11">
    <original>L</original>
    <variation>R</variation>
    <location>
        <position position="347"/>
    </location>
</feature>
<feature type="sequence variant" id="VAR_026611" description="In MAMM; mut0; dbSNP:rs1407914109." evidence="11">
    <original>H</original>
    <variation>Y</variation>
    <location>
        <position position="350"/>
    </location>
</feature>
<feature type="sequence variant" id="VAR_077224" description="In MAMM; mut0; dbSNP:rs1767612147." evidence="14">
    <original>L</original>
    <variation>P</variation>
    <location>
        <position position="358"/>
    </location>
</feature>
<feature type="sequence variant" id="VAR_075385" description="In MAMM; dbSNP:rs563776413." evidence="26">
    <original>Y</original>
    <variation>S</variation>
    <location>
        <position position="364"/>
    </location>
</feature>
<feature type="sequence variant" id="VAR_075386" description="In MAMM; mut-; no effect on protein abundance; loss of methylmalonyl-CoA mutase activity; decreased affinity for adenosylcob(III)alamin; alters thermodynamic stability; dbSNP:rs864309737." evidence="13 24">
    <original>N</original>
    <variation>S</variation>
    <location>
        <position position="366"/>
    </location>
</feature>
<feature type="sequence variant" id="VAR_004416" description="In MAMM." evidence="33">
    <original>V</original>
    <variation>D</variation>
    <location>
        <position position="368"/>
    </location>
</feature>
<feature type="sequence variant" id="VAR_026612" description="In MAMM; mut0; dbSNP:rs772552898." evidence="11 14">
    <original>R</original>
    <variation>C</variation>
    <location>
        <position position="369"/>
    </location>
</feature>
<feature type="sequence variant" id="VAR_004417" description="In MAMM; mut- and mut0; no effect on protein abundance; loss of methylmalonyl-CoA mutase activity; alters thermodynamic stability; dbSNP:rs564069299." evidence="11 13 24 34">
    <original>R</original>
    <variation>H</variation>
    <location>
        <position position="369"/>
    </location>
</feature>
<feature type="sequence variant" id="VAR_026613" description="In MAMM; mut0; dbSNP:rs368790885." evidence="11">
    <original>T</original>
    <variation>P</variation>
    <location>
        <position position="370"/>
    </location>
</feature>
<feature type="sequence variant" id="VAR_004418" description="In MAMM; mut0; decreased protein abundance; decreased methylmalonyl-CoA mutase activity; dbSNP:rs121918250." evidence="11 16 27">
    <original>A</original>
    <variation>E</variation>
    <location>
        <position position="377"/>
    </location>
</feature>
<feature type="sequence variant" id="VAR_026614" description="In MAMM; mut0." evidence="11">
    <original>Q</original>
    <variation>H</variation>
    <location>
        <position position="383"/>
    </location>
</feature>
<feature type="sequence variant" id="VAR_026615" description="In MAMM; mut0." evidence="11">
    <original>Q</original>
    <variation>P</variation>
    <location>
        <position position="383"/>
    </location>
</feature>
<feature type="sequence variant" id="VAR_026616" description="In MAMM; mut0; dbSNP:rs1554159937." evidence="11">
    <original>H</original>
    <variation>N</variation>
    <location>
        <position position="386"/>
    </location>
</feature>
<feature type="sequence variant" id="VAR_077225" description="In MAMM; mut0; dbSNP:rs866933356." evidence="11">
    <original>H</original>
    <variation>R</variation>
    <location>
        <position position="386"/>
    </location>
</feature>
<feature type="sequence variant" id="VAR_075387" description="In MAMM; mut-; no effect on protein abundance; decreased methylmalonyl-CoA mutase activity; decreased affinity for adenosylcob(III)alamin; alters thermodynamic stability; dbSNP:rs1400022403." evidence="21 24 26">
    <original>T</original>
    <variation>I</variation>
    <location>
        <position position="387"/>
    </location>
</feature>
<feature type="sequence variant" id="VAR_026617" description="In MAMM; mut0; dbSNP:rs766010704." evidence="11">
    <original>N</original>
    <variation>H</variation>
    <location>
        <position position="388"/>
    </location>
</feature>
<feature type="sequence variant" id="VAR_077226" description="In MAMM; mut0; decreased protein abundance; decreased methylmalonyl-CoA mutase activity; dbSNP:rs879253840." evidence="27">
    <original>N</original>
    <variation>K</variation>
    <location>
        <position position="388"/>
    </location>
</feature>
<feature type="sequence variant" id="VAR_026618" description="In MAMM; mut0." evidence="11">
    <location>
        <position position="389"/>
    </location>
</feature>
<feature type="sequence variant" id="VAR_026619" description="In MAMM; mut0." evidence="11">
    <location>
        <position position="412"/>
    </location>
</feature>
<feature type="sequence variant" id="VAR_077227" description="In MAMM; mut0; decreased protein abundance; decreased methylmalonyl-CoA mutase activity; dbSNP:rs879253842." evidence="27">
    <original>P</original>
    <variation>L</variation>
    <location>
        <position position="424"/>
    </location>
</feature>
<feature type="sequence variant" id="VAR_077228" description="In MAMM; mut-; decreased protein abundance; decreased methylmalonyl-CoA mutase activity; dbSNP:rs533755473." evidence="27">
    <original>G</original>
    <variation>E</variation>
    <location>
        <position position="426"/>
    </location>
</feature>
<feature type="sequence variant" id="VAR_026620" description="In MAMM; mut-; no effect on protein abundance; decreased methylmalonyl-CoA mutase activity; strong decreased affinity for adenosylcob(III)alamin; alters thermodynamic stability; dbSNP:rs769922244." evidence="11 24">
    <original>G</original>
    <variation>R</variation>
    <location>
        <position position="426"/>
    </location>
</feature>
<feature type="sequence variant" id="VAR_026621" description="In MAMM; mut0; dbSNP:rs753288303." evidence="11">
    <original>G</original>
    <variation>D</variation>
    <location>
        <position position="427"/>
    </location>
</feature>
<feature type="sequence variant" id="VAR_075388" description="In MAMM; mut0." evidence="13 21">
    <original>G</original>
    <variation>E</variation>
    <location>
        <position position="454"/>
    </location>
</feature>
<feature type="sequence variant" id="VAR_022407" description="In dbSNP:rs2229385." evidence="4 8 11 21 37">
    <original>A</original>
    <variation>T</variation>
    <location>
        <position position="499"/>
    </location>
</feature>
<feature type="sequence variant" id="VAR_078346" description="In MAMM; decreased protein expression; decreased methylmalonyl-CoA mutase activity." evidence="28">
    <original>I</original>
    <variation>T</variation>
    <location>
        <position position="505"/>
    </location>
</feature>
<feature type="sequence variant" id="VAR_075389" description="In MAMM; uncertain significance." evidence="21">
    <original>Q</original>
    <variation>E</variation>
    <location>
        <position position="514"/>
    </location>
</feature>
<feature type="sequence variant" id="VAR_078347" description="In MAMM; decreased protein expression; dbSNP:rs2127416800." evidence="28">
    <original>Q</original>
    <variation>K</variation>
    <location>
        <position position="514"/>
    </location>
</feature>
<feature type="sequence variant" id="VAR_026622" description="In MAMM; mut0; dbSNP:rs864309738." evidence="11">
    <original>L</original>
    <variation>P</variation>
    <location>
        <position position="518"/>
    </location>
</feature>
<feature type="sequence variant" id="VAR_004419" description="In dbSNP:rs1141321." evidence="11 18 21 25 32">
    <original>R</original>
    <variation>H</variation>
    <location>
        <position position="532"/>
    </location>
</feature>
<feature type="sequence variant" id="VAR_022408" description="In MAMM; mut0; dbSNP:rs760183775." evidence="3">
    <original>A</original>
    <variation>P</variation>
    <location>
        <position position="535"/>
    </location>
</feature>
<feature type="sequence variant" id="VAR_077229" description="In MAMM; uncertain significance; dbSNP:rs879253845." evidence="27">
    <original>A</original>
    <variation>V</variation>
    <location>
        <position position="552"/>
    </location>
</feature>
<feature type="sequence variant" id="VAR_026623" description="In MAMM; mut0; dbSNP:rs1238333040." evidence="11">
    <original>C</original>
    <variation>Y</variation>
    <location>
        <position position="560"/>
    </location>
</feature>
<feature type="sequence variant" id="VAR_026624" description="In MAMM; mut0; dbSNP:rs1767288356." evidence="11">
    <original>T</original>
    <variation>R</variation>
    <location>
        <position position="566"/>
    </location>
</feature>
<feature type="sequence variant" id="VAR_026625" description="In MAMM; mut-; affects proper folding; no effect on protein abundance; no effect on methylmalonyl-CoA mutase activity; decreased affinity for adenosylcob(III)alamin; does not alter thermodynamic stability; dbSNP:rs775593146." evidence="11 24">
    <original>F</original>
    <variation>S</variation>
    <location>
        <position position="573"/>
    </location>
</feature>
<feature type="sequence variant" id="VAR_022409" description="In MAMM; mut-." evidence="9">
    <original>Y</original>
    <variation>C</variation>
    <location>
        <position position="587"/>
    </location>
</feature>
<feature type="sequence variant" id="VAR_078348" description="In MAMM; no changed in protein expression; decreased methylmalonyl-CoA mutase activity; dbSNP:rs1554158951." evidence="28">
    <original>I</original>
    <variation>R</variation>
    <location>
        <position position="597"/>
    </location>
</feature>
<feature type="sequence variant" id="VAR_030495" description="In dbSNP:rs9473556.">
    <original>T</original>
    <variation>A</variation>
    <location>
        <position position="598"/>
    </location>
</feature>
<feature type="sequence variant" id="VAR_075390" description="In MAMM; mut0; affects proper folding; reduced strongly protein level; dbSNP:rs1554158777." evidence="21 24 27">
    <original>P</original>
    <variation>L</variation>
    <location>
        <position position="615"/>
    </location>
</feature>
<feature type="sequence variant" id="VAR_026626" description="In MAMM; mut0; dbSNP:rs1554158777." evidence="11">
    <original>P</original>
    <variation>R</variation>
    <location>
        <position position="615"/>
    </location>
</feature>
<feature type="sequence variant" id="VAR_022410" description="In MAMM; mut0; affects proper folding; reduced strongly protein level; loss of methylmalonyl-CoA mutase activity; dbSNP:rs1302409621." evidence="9 13 21 24 27">
    <original>P</original>
    <variation>T</variation>
    <location>
        <position position="615"/>
    </location>
</feature>
<feature type="sequence variant" id="VAR_023476" description="In MAMM; mut0; dbSNP:rs765284825." evidence="10 11 14">
    <original>R</original>
    <variation>C</variation>
    <location>
        <position position="616"/>
    </location>
</feature>
<feature type="sequence variant" id="VAR_023477" description="In MAMM; mut0; dbSNP:rs1554158775." evidence="10 14">
    <original>L</original>
    <variation>R</variation>
    <location>
        <position position="617"/>
    </location>
</feature>
<feature type="sequence variant" id="VAR_077230" description="In MAMM; dbSNP:rs879253846." evidence="27">
    <original>L</original>
    <variation>P</variation>
    <location>
        <position position="618"/>
    </location>
</feature>
<feature type="sequence variant" id="VAR_022411" description="In MAMM; mut0." evidence="9">
    <original>K</original>
    <variation>N</variation>
    <location>
        <position position="621"/>
    </location>
</feature>
<feature type="sequence variant" id="VAR_004420" description="In MAMM; mut0; dbSNP:rs121918254." evidence="9 11 31 34">
    <original>G</original>
    <variation>R</variation>
    <location>
        <position position="623"/>
    </location>
</feature>
<feature type="sequence variant" id="VAR_022412" description="In MAMM; no effect on protein abundance; dbSNP:rs768521956." evidence="9 27">
    <original>Q</original>
    <variation>R</variation>
    <location>
        <position position="624"/>
    </location>
</feature>
<feature type="sequence variant" id="VAR_077231" description="In MAMM; mut0; decreased protein abundance; decreased methylmalonyl-CoA mutase activity; dbSNP:rs879253847." evidence="27">
    <original>D</original>
    <variation>G</variation>
    <location>
        <position position="625"/>
    </location>
</feature>
<feature type="sequence variant" id="VAR_075391" description="In MAMM; mut0; no effect on protein abundance; decreased methylmalonyl-CoA mutase activity." evidence="21 27">
    <original>D</original>
    <variation>V</variation>
    <location>
        <position position="625"/>
    </location>
</feature>
<feature type="sequence variant" id="VAR_004421" description="In MAMM; mut-; dbSNP:rs982110849." evidence="32">
    <original>G</original>
    <variation>C</variation>
    <location>
        <position position="626"/>
    </location>
</feature>
<feature type="sequence variant" id="VAR_022413" description="In MAMM; mut0; dbSNP:rs372486357." evidence="3 9">
    <original>H</original>
    <variation>R</variation>
    <location>
        <position position="627"/>
    </location>
</feature>
<feature type="sequence variant" id="VAR_004422" description="In MAMM; mut0; dbSNP:rs143023066." evidence="11 13 32">
    <original>G</original>
    <variation>E</variation>
    <location>
        <position position="630"/>
    </location>
</feature>
<feature type="sequence variant" id="VAR_004423" description="In MAMM; mut-; no effect on protein abundance; decreased methylmalonyl-CoA mutase activity; decreased affinity for adenosylcob(III)alamin; does not alter thermodynamic stability; dbSNP:rs200055428." evidence="11 13 24 36">
    <original>V</original>
    <variation>G</variation>
    <location>
        <position position="633"/>
    </location>
</feature>
<feature type="sequence variant" id="VAR_022414" description="In MAMM; mut-." evidence="9">
    <original>G</original>
    <variation>E</variation>
    <location>
        <position position="637"/>
    </location>
</feature>
<feature type="sequence variant" id="VAR_026627" description="In MAMM; mut0; dbSNP:rs781501004." evidence="11">
    <original>G</original>
    <variation>R</variation>
    <location>
        <position position="637"/>
    </location>
</feature>
<feature type="sequence variant" id="VAR_022415" description="In MAMM; mut0." evidence="9">
    <original>F</original>
    <variation>I</variation>
    <location>
        <position position="638"/>
    </location>
</feature>
<feature type="sequence variant" id="VAR_022416" description="In MAMM; mut0; dbSNP:rs865815395." evidence="9">
    <original>D</original>
    <variation>Y</variation>
    <location>
        <position position="640"/>
    </location>
</feature>
<feature type="sequence variant" id="VAR_022417" description="In MAMM; mut-; dbSNP:rs747897332." evidence="9 11">
    <original>G</original>
    <variation>R</variation>
    <location>
        <position position="642"/>
    </location>
</feature>
<feature type="sequence variant" id="VAR_004424" description="In MAMM; mut-; no effect on protein abundance; decreased methylmalonyl-CoA mutase activity; strong decreased affinity for adenosylcob(III)alamin; alters thermodynamic stability; dbSNP:rs766721811." evidence="24 32">
    <original>G</original>
    <variation>D</variation>
    <location>
        <position position="648"/>
    </location>
</feature>
<feature type="sequence variant" id="VAR_004425" description="In MAMM; mut0; dbSNP:rs1360470463." evidence="33">
    <original>V</original>
    <variation>E</variation>
    <location>
        <position position="669"/>
    </location>
</feature>
<feature type="sequence variant" id="VAR_004426" description="In dbSNP:rs8589." evidence="4 5 6 7 8 11 18 21 25 35 37 41">
    <original>I</original>
    <variation>V</variation>
    <location>
        <position position="671"/>
    </location>
</feature>
<feature type="sequence variant" id="VAR_075392" description="In MAMM; decreased protein abundance; decreased methylmalonyl-CoA mutase activity; dbSNP:rs1164271240." evidence="21 27">
    <original>L</original>
    <variation>F</variation>
    <location>
        <position position="674"/>
    </location>
</feature>
<feature type="sequence variant" id="VAR_004427" description="In MAMM; mut-; dbSNP:rs147094927." evidence="11 34">
    <original>H</original>
    <variation>R</variation>
    <location>
        <position position="678"/>
    </location>
</feature>
<feature type="sequence variant" id="VAR_004428" description="In MAMM; mut-." evidence="36">
    <original>E</original>
    <variation>EL</variation>
    <location>
        <position position="684"/>
    </location>
</feature>
<feature type="sequence variant" id="VAR_004429" description="In MAMM; mut-; dbSNP:rs864309739." evidence="11 36">
    <original>L</original>
    <variation>R</variation>
    <location>
        <position position="685"/>
    </location>
</feature>
<feature type="sequence variant" id="VAR_075393" description="In MAMM." evidence="26">
    <original>L</original>
    <variation>P</variation>
    <location>
        <position position="692"/>
    </location>
</feature>
<feature type="sequence variant" id="VAR_075394" description="In MAMM; mut-; decreased protein abundance; loss of methylmalonyl-CoA mutase activity; decreased affinity for adenosylcob(III)alamin; alters thermodynamic stability; dbSNP:rs756225782." evidence="13 24 27">
    <original>R</original>
    <variation>L</variation>
    <location>
        <position position="694"/>
    </location>
</feature>
<feature type="sequence variant" id="VAR_004430" description="In MAMM; mut- and mut0; no effect on protein abundance; loss of methylmalonyl-CoA mutase activity; decreased affinity for adenosylcob(III)alamin; alters thermodynamic stability; dbSNP:rs777758903." evidence="9 11 13 14 24 26 32 34">
    <original>R</original>
    <variation>W</variation>
    <location>
        <position position="694"/>
    </location>
</feature>
<feature type="sequence variant" id="VAR_022418" description="In MAMM; mut-; no effect on protein abundance; loss of methylmalonyl-CoA mutase activity; decreased affinity for adenosylcob(III)alamin; alters thermodynamic stability; dbSNP:rs140600746." evidence="9 11 13 24">
    <original>M</original>
    <variation>K</variation>
    <location>
        <position position="700"/>
    </location>
</feature>
<feature type="sequence variant" id="VAR_004431" description="In MAMM; mut0; dbSNP:rs121918255." evidence="11 31">
    <original>G</original>
    <variation>R</variation>
    <location>
        <position position="703"/>
    </location>
</feature>
<feature type="sequence variant" id="VAR_004432" description="In MAMM; mut-; no effect on protein abundance; interferes with the binding of the cofactor to the apoenzyme; decreased methylmalonyl-CoA mutase activity; strong decreased affinity for adenosylcob(III)alamin; decreased thermodynamic stability; dbSNP:rs121918252." evidence="5 6 11 24 34 35">
    <original>G</original>
    <variation>V</variation>
    <location>
        <position position="717"/>
    </location>
</feature>
<feature type="sequence variant" id="VAR_078349" description="In MAMM; decreased protein expression; decreased methylmalonyl-CoA mutase activity; dbSNP:rs755077681." evidence="28">
    <original>G</original>
    <variation>D</variation>
    <location>
        <position position="723"/>
    </location>
</feature>
<feature type="sequence variant" id="VAR_077232" description="In MAMM; dbSNP:rs753461919." evidence="24">
    <original>L</original>
    <variation>F</variation>
    <location>
        <position position="736"/>
    </location>
</feature>
<feature type="sequence conflict" description="In Ref. 3; AAA99226." evidence="38" ref="3">
    <original>V</original>
    <variation>L</variation>
    <location>
        <position position="153"/>
    </location>
</feature>
<feature type="sequence conflict" description="In Ref. 3; AAA99226." evidence="38" ref="3">
    <original>E</original>
    <variation>D</variation>
    <location>
        <position position="236"/>
    </location>
</feature>
<feature type="sequence conflict" description="In Ref. 3; AAA99226." evidence="38" ref="3">
    <original>ILEL</original>
    <variation>FWSW</variation>
    <location>
        <begin position="274"/>
        <end position="277"/>
    </location>
</feature>
<feature type="sequence conflict" description="In Ref. 3; AAA99226." evidence="38" ref="3">
    <original>Y</original>
    <variation>H</variation>
    <location>
        <position position="316"/>
    </location>
</feature>
<feature type="sequence conflict" description="In Ref. 3; AAA99226." evidence="38" ref="3">
    <original>E</original>
    <variation>G</variation>
    <location>
        <position position="516"/>
    </location>
</feature>
<feature type="sequence conflict" description="In Ref. 3; AAA99226." evidence="38" ref="3">
    <original>F</original>
    <variation>Y</variation>
    <location>
        <position position="591"/>
    </location>
</feature>
<feature type="helix" evidence="45">
    <location>
        <begin position="30"/>
        <end position="33"/>
    </location>
</feature>
<feature type="helix" evidence="47">
    <location>
        <begin position="41"/>
        <end position="50"/>
    </location>
</feature>
<feature type="turn" evidence="44">
    <location>
        <begin position="51"/>
        <end position="53"/>
    </location>
</feature>
<feature type="helix" evidence="47">
    <location>
        <begin position="56"/>
        <end position="59"/>
    </location>
</feature>
<feature type="strand" evidence="47">
    <location>
        <begin position="60"/>
        <end position="62"/>
    </location>
</feature>
<feature type="helix" evidence="47">
    <location>
        <begin position="75"/>
        <end position="77"/>
    </location>
</feature>
<feature type="strand" evidence="47">
    <location>
        <begin position="95"/>
        <end position="98"/>
    </location>
</feature>
<feature type="strand" evidence="47">
    <location>
        <begin position="101"/>
        <end position="103"/>
    </location>
</feature>
<feature type="strand" evidence="44">
    <location>
        <begin position="106"/>
        <end position="111"/>
    </location>
</feature>
<feature type="helix" evidence="47">
    <location>
        <begin position="116"/>
        <end position="128"/>
    </location>
</feature>
<feature type="strand" evidence="47">
    <location>
        <begin position="133"/>
        <end position="136"/>
    </location>
</feature>
<feature type="helix" evidence="47">
    <location>
        <begin position="140"/>
        <end position="143"/>
    </location>
</feature>
<feature type="helix" evidence="47">
    <location>
        <begin position="151"/>
        <end position="153"/>
    </location>
</feature>
<feature type="turn" evidence="47">
    <location>
        <begin position="154"/>
        <end position="159"/>
    </location>
</feature>
<feature type="strand" evidence="47">
    <location>
        <begin position="160"/>
        <end position="162"/>
    </location>
</feature>
<feature type="helix" evidence="47">
    <location>
        <begin position="167"/>
        <end position="173"/>
    </location>
</feature>
<feature type="turn" evidence="47">
    <location>
        <begin position="174"/>
        <end position="176"/>
    </location>
</feature>
<feature type="turn" evidence="47">
    <location>
        <begin position="179"/>
        <end position="181"/>
    </location>
</feature>
<feature type="strand" evidence="47">
    <location>
        <begin position="183"/>
        <end position="186"/>
    </location>
</feature>
<feature type="helix" evidence="47">
    <location>
        <begin position="192"/>
        <end position="205"/>
    </location>
</feature>
<feature type="helix" evidence="47">
    <location>
        <begin position="210"/>
        <end position="212"/>
    </location>
</feature>
<feature type="strand" evidence="47">
    <location>
        <begin position="214"/>
        <end position="217"/>
    </location>
</feature>
<feature type="helix" evidence="47">
    <location>
        <begin position="221"/>
        <end position="226"/>
    </location>
</feature>
<feature type="strand" evidence="48">
    <location>
        <begin position="230"/>
        <end position="232"/>
    </location>
</feature>
<feature type="helix" evidence="47">
    <location>
        <begin position="235"/>
        <end position="252"/>
    </location>
</feature>
<feature type="strand" evidence="47">
    <location>
        <begin position="259"/>
        <end position="262"/>
    </location>
</feature>
<feature type="helix" evidence="47">
    <location>
        <begin position="264"/>
        <end position="268"/>
    </location>
</feature>
<feature type="helix" evidence="47">
    <location>
        <begin position="273"/>
        <end position="293"/>
    </location>
</feature>
<feature type="helix" evidence="47">
    <location>
        <begin position="298"/>
        <end position="301"/>
    </location>
</feature>
<feature type="helix" evidence="47">
    <location>
        <begin position="302"/>
        <end position="304"/>
    </location>
</feature>
<feature type="strand" evidence="47">
    <location>
        <begin position="305"/>
        <end position="311"/>
    </location>
</feature>
<feature type="helix" evidence="47">
    <location>
        <begin position="315"/>
        <end position="337"/>
    </location>
</feature>
<feature type="helix" evidence="47">
    <location>
        <begin position="342"/>
        <end position="345"/>
    </location>
</feature>
<feature type="strand" evidence="47">
    <location>
        <begin position="349"/>
        <end position="353"/>
    </location>
</feature>
<feature type="helix" evidence="46">
    <location>
        <begin position="355"/>
        <end position="357"/>
    </location>
</feature>
<feature type="strand" evidence="47">
    <location>
        <begin position="360"/>
        <end position="362"/>
    </location>
</feature>
<feature type="helix" evidence="47">
    <location>
        <begin position="365"/>
        <end position="379"/>
    </location>
</feature>
<feature type="strand" evidence="47">
    <location>
        <begin position="383"/>
        <end position="386"/>
    </location>
</feature>
<feature type="turn" evidence="47">
    <location>
        <begin position="390"/>
        <end position="394"/>
    </location>
</feature>
<feature type="helix" evidence="47">
    <location>
        <begin position="399"/>
        <end position="414"/>
    </location>
</feature>
<feature type="helix" evidence="47">
    <location>
        <begin position="418"/>
        <end position="420"/>
    </location>
</feature>
<feature type="strand" evidence="47">
    <location>
        <begin position="421"/>
        <end position="423"/>
    </location>
</feature>
<feature type="turn" evidence="47">
    <location>
        <begin position="424"/>
        <end position="427"/>
    </location>
</feature>
<feature type="helix" evidence="47">
    <location>
        <begin position="429"/>
        <end position="451"/>
    </location>
</feature>
<feature type="helix" evidence="47">
    <location>
        <begin position="455"/>
        <end position="461"/>
    </location>
</feature>
<feature type="helix" evidence="47">
    <location>
        <begin position="463"/>
        <end position="480"/>
    </location>
</feature>
<feature type="strand" evidence="43">
    <location>
        <begin position="482"/>
        <end position="484"/>
    </location>
</feature>
<feature type="turn" evidence="47">
    <location>
        <begin position="487"/>
        <end position="489"/>
    </location>
</feature>
<feature type="strand" evidence="47">
    <location>
        <begin position="490"/>
        <end position="492"/>
    </location>
</feature>
<feature type="helix" evidence="47">
    <location>
        <begin position="508"/>
        <end position="524"/>
    </location>
</feature>
<feature type="helix" evidence="47">
    <location>
        <begin position="527"/>
        <end position="543"/>
    </location>
</feature>
<feature type="helix" evidence="47">
    <location>
        <begin position="548"/>
        <end position="557"/>
    </location>
</feature>
<feature type="helix" evidence="47">
    <location>
        <begin position="562"/>
        <end position="573"/>
    </location>
</feature>
<feature type="helix" evidence="47">
    <location>
        <begin position="586"/>
        <end position="591"/>
    </location>
</feature>
<feature type="helix" evidence="47">
    <location>
        <begin position="595"/>
        <end position="611"/>
    </location>
</feature>
<feature type="strand" evidence="47">
    <location>
        <begin position="616"/>
        <end position="620"/>
    </location>
</feature>
<feature type="helix" evidence="47">
    <location>
        <begin position="629"/>
        <end position="640"/>
    </location>
</feature>
<feature type="strand" evidence="47">
    <location>
        <begin position="644"/>
        <end position="647"/>
    </location>
</feature>
<feature type="helix" evidence="47">
    <location>
        <begin position="654"/>
        <end position="663"/>
    </location>
</feature>
<feature type="strand" evidence="47">
    <location>
        <begin position="667"/>
        <end position="673"/>
    </location>
</feature>
<feature type="helix" evidence="47">
    <location>
        <begin position="678"/>
        <end position="691"/>
    </location>
</feature>
<feature type="strand" evidence="47">
    <location>
        <begin position="697"/>
        <end position="704"/>
    </location>
</feature>
<feature type="helix" evidence="47">
    <location>
        <begin position="707"/>
        <end position="709"/>
    </location>
</feature>
<feature type="helix" evidence="47">
    <location>
        <begin position="710"/>
        <end position="716"/>
    </location>
</feature>
<feature type="strand" evidence="47">
    <location>
        <begin position="720"/>
        <end position="722"/>
    </location>
</feature>
<feature type="helix" evidence="47">
    <location>
        <begin position="728"/>
        <end position="745"/>
    </location>
</feature>
<proteinExistence type="evidence at protein level"/>
<evidence type="ECO:0000250" key="1">
    <source>
        <dbReference type="UniProtKB" id="P16332"/>
    </source>
</evidence>
<evidence type="ECO:0000255" key="2">
    <source>
        <dbReference type="PROSITE-ProRule" id="PRU00666"/>
    </source>
</evidence>
<evidence type="ECO:0000269" key="3">
    <source>
    </source>
</evidence>
<evidence type="ECO:0000269" key="4">
    <source>
    </source>
</evidence>
<evidence type="ECO:0000269" key="5">
    <source>
    </source>
</evidence>
<evidence type="ECO:0000269" key="6">
    <source>
    </source>
</evidence>
<evidence type="ECO:0000269" key="7">
    <source>
    </source>
</evidence>
<evidence type="ECO:0000269" key="8">
    <source>
    </source>
</evidence>
<evidence type="ECO:0000269" key="9">
    <source>
    </source>
</evidence>
<evidence type="ECO:0000269" key="10">
    <source>
    </source>
</evidence>
<evidence type="ECO:0000269" key="11">
    <source>
    </source>
</evidence>
<evidence type="ECO:0000269" key="12">
    <source>
    </source>
</evidence>
<evidence type="ECO:0000269" key="13">
    <source>
    </source>
</evidence>
<evidence type="ECO:0000269" key="14">
    <source>
    </source>
</evidence>
<evidence type="ECO:0000269" key="15">
    <source>
    </source>
</evidence>
<evidence type="ECO:0000269" key="16">
    <source>
    </source>
</evidence>
<evidence type="ECO:0000269" key="17">
    <source>
    </source>
</evidence>
<evidence type="ECO:0000269" key="18">
    <source>
    </source>
</evidence>
<evidence type="ECO:0000269" key="19">
    <source>
    </source>
</evidence>
<evidence type="ECO:0000269" key="20">
    <source>
    </source>
</evidence>
<evidence type="ECO:0000269" key="21">
    <source>
    </source>
</evidence>
<evidence type="ECO:0000269" key="22">
    <source>
    </source>
</evidence>
<evidence type="ECO:0000269" key="23">
    <source>
    </source>
</evidence>
<evidence type="ECO:0000269" key="24">
    <source>
    </source>
</evidence>
<evidence type="ECO:0000269" key="25">
    <source>
    </source>
</evidence>
<evidence type="ECO:0000269" key="26">
    <source>
    </source>
</evidence>
<evidence type="ECO:0000269" key="27">
    <source>
    </source>
</evidence>
<evidence type="ECO:0000269" key="28">
    <source>
    </source>
</evidence>
<evidence type="ECO:0000269" key="29">
    <source>
    </source>
</evidence>
<evidence type="ECO:0000269" key="30">
    <source>
    </source>
</evidence>
<evidence type="ECO:0000269" key="31">
    <source>
    </source>
</evidence>
<evidence type="ECO:0000269" key="32">
    <source>
    </source>
</evidence>
<evidence type="ECO:0000269" key="33">
    <source>
    </source>
</evidence>
<evidence type="ECO:0000269" key="34">
    <source>
    </source>
</evidence>
<evidence type="ECO:0000269" key="35">
    <source>
    </source>
</evidence>
<evidence type="ECO:0000269" key="36">
    <source>
    </source>
</evidence>
<evidence type="ECO:0000269" key="37">
    <source ref="5"/>
</evidence>
<evidence type="ECO:0000305" key="38"/>
<evidence type="ECO:0000305" key="39">
    <source>
    </source>
</evidence>
<evidence type="ECO:0000312" key="40">
    <source>
        <dbReference type="HGNC" id="HGNC:7526"/>
    </source>
</evidence>
<evidence type="ECO:0007744" key="41">
    <source>
    </source>
</evidence>
<evidence type="ECO:0007744" key="42">
    <source>
    </source>
</evidence>
<evidence type="ECO:0007829" key="43">
    <source>
        <dbReference type="PDB" id="2XIJ"/>
    </source>
</evidence>
<evidence type="ECO:0007829" key="44">
    <source>
        <dbReference type="PDB" id="2XIQ"/>
    </source>
</evidence>
<evidence type="ECO:0007829" key="45">
    <source>
        <dbReference type="PDB" id="3BIC"/>
    </source>
</evidence>
<evidence type="ECO:0007829" key="46">
    <source>
        <dbReference type="PDB" id="8DYJ"/>
    </source>
</evidence>
<evidence type="ECO:0007829" key="47">
    <source>
        <dbReference type="PDB" id="8DYL"/>
    </source>
</evidence>
<evidence type="ECO:0007829" key="48">
    <source>
        <dbReference type="PDB" id="8GJU"/>
    </source>
</evidence>
<comment type="function">
    <text evidence="5 17 20 22 23 24 27 28 29 30">Catalyzes the reversible isomerization of methylmalonyl-CoA (MMCoA) (generated from branched-chain amino acid metabolism and degradation of dietary odd chain fatty acids and cholesterol) to succinyl-CoA (3-carboxypropionyl-CoA), a key intermediate of the tricarboxylic acid cycle.</text>
</comment>
<comment type="catalytic activity">
    <reaction evidence="5 17 20 22 23 24 27 28 29 30">
        <text>(R)-methylmalonyl-CoA = succinyl-CoA</text>
        <dbReference type="Rhea" id="RHEA:22888"/>
        <dbReference type="ChEBI" id="CHEBI:57292"/>
        <dbReference type="ChEBI" id="CHEBI:57326"/>
        <dbReference type="EC" id="5.4.99.2"/>
    </reaction>
    <physiologicalReaction direction="left-to-right" evidence="39">
        <dbReference type="Rhea" id="RHEA:22889"/>
    </physiologicalReaction>
</comment>
<comment type="cofactor">
    <cofactor evidence="17 20 29 30">
        <name>adenosylcob(III)alamin</name>
        <dbReference type="ChEBI" id="CHEBI:18408"/>
    </cofactor>
</comment>
<comment type="activity regulation">
    <text evidence="29 30">During catalysis, accumulation of oxidized inactive cofactor hydroxocobalamin (OH2Cbl) leads to loss of MMUT activity (PubMed:21138732, PubMed:28943303). Interaction with MMAA decreases the rate of OH2Cbl formation and promotes the replacement of OH2Cbl by the active cofactor adenosylcobalamin (AdoCbl), thereby restoring MMUT activity (PubMed:21138732, PubMed:28943303). Inhibited by itaconyl-CoA, a metabolite that inactivates the coenzyme B12 cofactor (PubMed:29056341). Inhibited at high concentration of substrate (PubMed:28943303).</text>
</comment>
<comment type="biophysicochemical properties">
    <kinetics>
        <KM evidence="24">4.7 nM for adenosylcob(III)alamin</KM>
        <KM evidence="17">0.24 uM for adenosylcob(III)alamin</KM>
        <KM evidence="17">0.35 mM for methylmalonyl-CoA</KM>
        <KM evidence="29">76.15 uM for methylmalonyl-CoA</KM>
        <KM evidence="29">23.19 uM for methylmalonyl-CoA (in the presence of methylmalonic aciduria type A protein/MMAA and GTP)</KM>
        <Vmax evidence="29">9.06 umol/min/mg enzyme for methylmalonyl-CoA</Vmax>
        <Vmax evidence="29">4.83 umol/min/mg enzyme for methylmalonyl-CoA in the presence of methylmalonic aciduria type A protein/MMAA and GTP</Vmax>
    </kinetics>
</comment>
<comment type="subunit">
    <text evidence="19 20 29">Homodimer (PubMed:20876572). Interacts (the apoenzyme form) with MMAA; the interaction is GTP dependent (PubMed:20876572, PubMed:21138732, PubMed:28943303).</text>
</comment>
<comment type="interaction">
    <interactant intactId="EBI-2690467">
        <id>P22033</id>
    </interactant>
    <interactant intactId="EBI-466029">
        <id>P42858</id>
        <label>HTT</label>
    </interactant>
    <organismsDiffer>false</organismsDiffer>
    <experiments>12</experiments>
</comment>
<comment type="interaction">
    <interactant intactId="EBI-2690467">
        <id>P22033</id>
    </interactant>
    <interactant intactId="EBI-10714945">
        <id>Q8IVH4</id>
        <label>MMAA</label>
    </interactant>
    <organismsDiffer>false</organismsDiffer>
    <experiments>3</experiments>
</comment>
<comment type="interaction">
    <interactant intactId="EBI-2690467">
        <id>P22033</id>
    </interactant>
    <interactant intactId="EBI-2690467">
        <id>P22033</id>
        <label>MMUT</label>
    </interactant>
    <organismsDiffer>false</organismsDiffer>
    <experiments>2</experiments>
</comment>
<comment type="subcellular location">
    <subcellularLocation>
        <location evidence="22">Mitochondrion matrix</location>
    </subcellularLocation>
    <subcellularLocation>
        <location evidence="29">Mitochondrion</location>
    </subcellularLocation>
    <subcellularLocation>
        <location evidence="29">Cytoplasm</location>
    </subcellularLocation>
</comment>
<comment type="disease" evidence="3 4 5 6 9 10 11 12 13 14 15 16 18 21 24 26 27 28 31 32 33 34 35 36">
    <disease id="DI-00749">
        <name>Methylmalonic aciduria due to methylmalonyl-CoA mutase deficiency</name>
        <acronym>MAMM</acronym>
        <description>An often fatal disorder of organic acid metabolism. Common clinical features include lethargy, vomiting, failure to thrive, hypotonia, neurological deficit and early death. Two forms of the disease are distinguished by the presence (mut-) or absence (mut0) of residual enzyme activity. Mut0 patients have more severe neurological manifestations of the disease than do MUT- patients. MAMM is unresponsive to vitamin B12 therapy.</description>
        <dbReference type="MIM" id="251000"/>
    </disease>
    <text>The disease is caused by variants affecting the gene represented in this entry.</text>
</comment>
<comment type="similarity">
    <text evidence="38">Belongs to the methylmalonyl-CoA mutase family.</text>
</comment>
<comment type="online information" name="Wikipedia">
    <link uri="https://en.wikipedia.org/wiki/Methylmalonyl_Coenzyme_A_mutase"/>
    <text>Methylmalonyl coenzyme A mutase entry</text>
</comment>
<dbReference type="EC" id="5.4.99.2" evidence="5 20 23 24 27 28 29"/>
<dbReference type="EMBL" id="M65131">
    <property type="protein sequence ID" value="AAA59569.1"/>
    <property type="molecule type" value="mRNA"/>
</dbReference>
<dbReference type="EMBL" id="M37510">
    <property type="protein sequence ID" value="AAA99226.1"/>
    <property type="molecule type" value="Genomic_DNA"/>
</dbReference>
<dbReference type="EMBL" id="M37499">
    <property type="protein sequence ID" value="AAA99226.1"/>
    <property type="status" value="JOINED"/>
    <property type="molecule type" value="Genomic_DNA"/>
</dbReference>
<dbReference type="EMBL" id="M37500">
    <property type="protein sequence ID" value="AAA99226.1"/>
    <property type="status" value="JOINED"/>
    <property type="molecule type" value="Genomic_DNA"/>
</dbReference>
<dbReference type="EMBL" id="M37501">
    <property type="protein sequence ID" value="AAA99226.1"/>
    <property type="status" value="JOINED"/>
    <property type="molecule type" value="Genomic_DNA"/>
</dbReference>
<dbReference type="EMBL" id="M37503">
    <property type="protein sequence ID" value="AAA99226.1"/>
    <property type="status" value="JOINED"/>
    <property type="molecule type" value="Genomic_DNA"/>
</dbReference>
<dbReference type="EMBL" id="M37504">
    <property type="protein sequence ID" value="AAA99226.1"/>
    <property type="status" value="JOINED"/>
    <property type="molecule type" value="Genomic_DNA"/>
</dbReference>
<dbReference type="EMBL" id="M37505">
    <property type="protein sequence ID" value="AAA99226.1"/>
    <property type="status" value="JOINED"/>
    <property type="molecule type" value="Genomic_DNA"/>
</dbReference>
<dbReference type="EMBL" id="M37506">
    <property type="protein sequence ID" value="AAA99226.1"/>
    <property type="status" value="JOINED"/>
    <property type="molecule type" value="Genomic_DNA"/>
</dbReference>
<dbReference type="EMBL" id="M37507">
    <property type="protein sequence ID" value="AAA99226.1"/>
    <property type="status" value="JOINED"/>
    <property type="molecule type" value="Genomic_DNA"/>
</dbReference>
<dbReference type="EMBL" id="M37508">
    <property type="protein sequence ID" value="AAA99226.1"/>
    <property type="status" value="JOINED"/>
    <property type="molecule type" value="Genomic_DNA"/>
</dbReference>
<dbReference type="EMBL" id="M37509">
    <property type="protein sequence ID" value="AAA99226.1"/>
    <property type="status" value="JOINED"/>
    <property type="molecule type" value="Genomic_DNA"/>
</dbReference>
<dbReference type="EMBL" id="AK292568">
    <property type="protein sequence ID" value="BAF85257.1"/>
    <property type="molecule type" value="mRNA"/>
</dbReference>
<dbReference type="EMBL" id="BT007434">
    <property type="protein sequence ID" value="AAP36102.1"/>
    <property type="molecule type" value="mRNA"/>
</dbReference>
<dbReference type="EMBL" id="AL590668">
    <property type="status" value="NOT_ANNOTATED_CDS"/>
    <property type="molecule type" value="Genomic_DNA"/>
</dbReference>
<dbReference type="EMBL" id="BC016282">
    <property type="protein sequence ID" value="AAH16282.1"/>
    <property type="molecule type" value="mRNA"/>
</dbReference>
<dbReference type="CCDS" id="CCDS4924.1"/>
<dbReference type="PIR" id="A59145">
    <property type="entry name" value="A59145"/>
</dbReference>
<dbReference type="RefSeq" id="NP_000246.2">
    <property type="nucleotide sequence ID" value="NM_000255.4"/>
</dbReference>
<dbReference type="RefSeq" id="XP_005249200.1">
    <property type="nucleotide sequence ID" value="XM_005249143.4"/>
</dbReference>
<dbReference type="RefSeq" id="XP_054211495.1">
    <property type="nucleotide sequence ID" value="XM_054355520.1"/>
</dbReference>
<dbReference type="PDB" id="2XIJ">
    <property type="method" value="X-ray"/>
    <property type="resolution" value="1.95 A"/>
    <property type="chains" value="A=12-750"/>
</dbReference>
<dbReference type="PDB" id="2XIQ">
    <property type="method" value="X-ray"/>
    <property type="resolution" value="1.95 A"/>
    <property type="chains" value="A/B=12-750"/>
</dbReference>
<dbReference type="PDB" id="3BIC">
    <property type="method" value="X-ray"/>
    <property type="resolution" value="2.60 A"/>
    <property type="chains" value="A/B=12-750"/>
</dbReference>
<dbReference type="PDB" id="8DYJ">
    <property type="method" value="X-ray"/>
    <property type="resolution" value="2.20 A"/>
    <property type="chains" value="B=11-750"/>
</dbReference>
<dbReference type="PDB" id="8DYL">
    <property type="method" value="X-ray"/>
    <property type="resolution" value="1.90 A"/>
    <property type="chains" value="B=11-750"/>
</dbReference>
<dbReference type="PDB" id="8GJU">
    <property type="method" value="X-ray"/>
    <property type="resolution" value="2.79 A"/>
    <property type="chains" value="H/J/K/L=11-750"/>
</dbReference>
<dbReference type="PDBsum" id="2XIJ"/>
<dbReference type="PDBsum" id="2XIQ"/>
<dbReference type="PDBsum" id="3BIC"/>
<dbReference type="PDBsum" id="8DYJ"/>
<dbReference type="PDBsum" id="8DYL"/>
<dbReference type="PDBsum" id="8GJU"/>
<dbReference type="SMR" id="P22033"/>
<dbReference type="BioGRID" id="110680">
    <property type="interactions" value="74"/>
</dbReference>
<dbReference type="CORUM" id="P22033"/>
<dbReference type="FunCoup" id="P22033">
    <property type="interactions" value="799"/>
</dbReference>
<dbReference type="IntAct" id="P22033">
    <property type="interactions" value="20"/>
</dbReference>
<dbReference type="MINT" id="P22033"/>
<dbReference type="STRING" id="9606.ENSP00000274813"/>
<dbReference type="DrugBank" id="DB00115">
    <property type="generic name" value="Cyanocobalamin"/>
</dbReference>
<dbReference type="DrugBank" id="DB00200">
    <property type="generic name" value="Hydroxocobalamin"/>
</dbReference>
<dbReference type="SwissLipids" id="SLP:000001254"/>
<dbReference type="GlyGen" id="P22033">
    <property type="glycosylation" value="2 sites, 1 O-linked glycan (2 sites)"/>
</dbReference>
<dbReference type="iPTMnet" id="P22033"/>
<dbReference type="MetOSite" id="P22033"/>
<dbReference type="PhosphoSitePlus" id="P22033"/>
<dbReference type="SwissPalm" id="P22033"/>
<dbReference type="BioMuta" id="MUT"/>
<dbReference type="DMDM" id="317373575"/>
<dbReference type="jPOST" id="P22033"/>
<dbReference type="MassIVE" id="P22033"/>
<dbReference type="PaxDb" id="9606-ENSP00000274813"/>
<dbReference type="PeptideAtlas" id="P22033"/>
<dbReference type="ProteomicsDB" id="53953"/>
<dbReference type="Pumba" id="P22033"/>
<dbReference type="Antibodypedia" id="30809">
    <property type="antibodies" value="186 antibodies from 27 providers"/>
</dbReference>
<dbReference type="DNASU" id="4594"/>
<dbReference type="Ensembl" id="ENST00000274813.4">
    <property type="protein sequence ID" value="ENSP00000274813.3"/>
    <property type="gene ID" value="ENSG00000146085.8"/>
</dbReference>
<dbReference type="GeneID" id="4594"/>
<dbReference type="KEGG" id="hsa:4594"/>
<dbReference type="MANE-Select" id="ENST00000274813.4">
    <property type="protein sequence ID" value="ENSP00000274813.3"/>
    <property type="RefSeq nucleotide sequence ID" value="NM_000255.4"/>
    <property type="RefSeq protein sequence ID" value="NP_000246.2"/>
</dbReference>
<dbReference type="UCSC" id="uc003ozg.5">
    <property type="organism name" value="human"/>
</dbReference>
<dbReference type="AGR" id="HGNC:7526"/>
<dbReference type="CTD" id="4594"/>
<dbReference type="DisGeNET" id="4594"/>
<dbReference type="GeneCards" id="MMUT"/>
<dbReference type="GeneReviews" id="MMUT"/>
<dbReference type="HGNC" id="HGNC:7526">
    <property type="gene designation" value="MMUT"/>
</dbReference>
<dbReference type="HPA" id="ENSG00000146085">
    <property type="expression patterns" value="Tissue enhanced (liver)"/>
</dbReference>
<dbReference type="MalaCards" id="MMUT"/>
<dbReference type="MIM" id="251000">
    <property type="type" value="phenotype"/>
</dbReference>
<dbReference type="MIM" id="609058">
    <property type="type" value="gene"/>
</dbReference>
<dbReference type="neXtProt" id="NX_P22033"/>
<dbReference type="OpenTargets" id="ENSG00000146085"/>
<dbReference type="Orphanet" id="79312">
    <property type="disease" value="Vitamin B12-unresponsive methylmalonic acidemia type mut-"/>
</dbReference>
<dbReference type="Orphanet" id="289916">
    <property type="disease" value="Vitamin B12-unresponsive methylmalonic acidemia type mut0"/>
</dbReference>
<dbReference type="PharmGKB" id="PA31327"/>
<dbReference type="VEuPathDB" id="HostDB:ENSG00000146085"/>
<dbReference type="eggNOG" id="ENOG502QQ7X">
    <property type="taxonomic scope" value="Eukaryota"/>
</dbReference>
<dbReference type="GeneTree" id="ENSGT00390000011892"/>
<dbReference type="HOGENOM" id="CLU_009523_3_1_1"/>
<dbReference type="InParanoid" id="P22033"/>
<dbReference type="OMA" id="IQEETHI"/>
<dbReference type="OrthoDB" id="198977at2759"/>
<dbReference type="PAN-GO" id="P22033">
    <property type="GO annotations" value="5 GO annotations based on evolutionary models"/>
</dbReference>
<dbReference type="PhylomeDB" id="P22033"/>
<dbReference type="TreeFam" id="TF313557"/>
<dbReference type="BioCyc" id="MetaCyc:HS07322-MONOMER"/>
<dbReference type="BRENDA" id="5.4.99.2">
    <property type="organism ID" value="2681"/>
</dbReference>
<dbReference type="PathwayCommons" id="P22033"/>
<dbReference type="Reactome" id="R-HSA-3359475">
    <property type="pathway name" value="Defective MMAA causes MMA, cblA type"/>
</dbReference>
<dbReference type="Reactome" id="R-HSA-3359478">
    <property type="pathway name" value="Defective MUT causes MMAM"/>
</dbReference>
<dbReference type="Reactome" id="R-HSA-71032">
    <property type="pathway name" value="Propionyl-CoA catabolism"/>
</dbReference>
<dbReference type="Reactome" id="R-HSA-9759218">
    <property type="pathway name" value="Cobalamin (Cbl) metabolism"/>
</dbReference>
<dbReference type="SABIO-RK" id="P22033"/>
<dbReference type="SignaLink" id="P22033"/>
<dbReference type="SIGNOR" id="P22033"/>
<dbReference type="BioGRID-ORCS" id="4594">
    <property type="hits" value="14 hits in 1168 CRISPR screens"/>
</dbReference>
<dbReference type="ChiTaRS" id="MUT">
    <property type="organism name" value="human"/>
</dbReference>
<dbReference type="EvolutionaryTrace" id="P22033"/>
<dbReference type="GeneWiki" id="Methylmalonyl-CoA_mutase"/>
<dbReference type="GenomeRNAi" id="4594"/>
<dbReference type="Pharos" id="P22033">
    <property type="development level" value="Tbio"/>
</dbReference>
<dbReference type="PRO" id="PR:P22033"/>
<dbReference type="Proteomes" id="UP000005640">
    <property type="component" value="Chromosome 6"/>
</dbReference>
<dbReference type="RNAct" id="P22033">
    <property type="molecule type" value="protein"/>
</dbReference>
<dbReference type="Bgee" id="ENSG00000146085">
    <property type="expression patterns" value="Expressed in choroid plexus epithelium and 208 other cell types or tissues"/>
</dbReference>
<dbReference type="ExpressionAtlas" id="P22033">
    <property type="expression patterns" value="baseline and differential"/>
</dbReference>
<dbReference type="GO" id="GO:0005737">
    <property type="term" value="C:cytoplasm"/>
    <property type="evidence" value="ECO:0000314"/>
    <property type="project" value="UniProtKB"/>
</dbReference>
<dbReference type="GO" id="GO:0005759">
    <property type="term" value="C:mitochondrial matrix"/>
    <property type="evidence" value="ECO:0000314"/>
    <property type="project" value="UniProtKB"/>
</dbReference>
<dbReference type="GO" id="GO:0005739">
    <property type="term" value="C:mitochondrion"/>
    <property type="evidence" value="ECO:0000314"/>
    <property type="project" value="UniProtKB"/>
</dbReference>
<dbReference type="GO" id="GO:0031419">
    <property type="term" value="F:cobalamin binding"/>
    <property type="evidence" value="ECO:0000314"/>
    <property type="project" value="UniProtKB"/>
</dbReference>
<dbReference type="GO" id="GO:0003924">
    <property type="term" value="F:GTPase activity"/>
    <property type="evidence" value="ECO:0000314"/>
    <property type="project" value="UniProtKB"/>
</dbReference>
<dbReference type="GO" id="GO:0042802">
    <property type="term" value="F:identical protein binding"/>
    <property type="evidence" value="ECO:0000314"/>
    <property type="project" value="UniProtKB"/>
</dbReference>
<dbReference type="GO" id="GO:0046872">
    <property type="term" value="F:metal ion binding"/>
    <property type="evidence" value="ECO:0007669"/>
    <property type="project" value="UniProtKB-KW"/>
</dbReference>
<dbReference type="GO" id="GO:0004494">
    <property type="term" value="F:methylmalonyl-CoA mutase activity"/>
    <property type="evidence" value="ECO:0000314"/>
    <property type="project" value="UniProtKB"/>
</dbReference>
<dbReference type="GO" id="GO:0072341">
    <property type="term" value="F:modified amino acid binding"/>
    <property type="evidence" value="ECO:0000314"/>
    <property type="project" value="UniProtKB"/>
</dbReference>
<dbReference type="GO" id="GO:0042803">
    <property type="term" value="F:protein homodimerization activity"/>
    <property type="evidence" value="ECO:0000314"/>
    <property type="project" value="UniProtKB"/>
</dbReference>
<dbReference type="GO" id="GO:0050667">
    <property type="term" value="P:homocysteine metabolic process"/>
    <property type="evidence" value="ECO:0000314"/>
    <property type="project" value="UniProtKB"/>
</dbReference>
<dbReference type="GO" id="GO:0043547">
    <property type="term" value="P:positive regulation of GTPase activity"/>
    <property type="evidence" value="ECO:0000314"/>
    <property type="project" value="UniProtKB"/>
</dbReference>
<dbReference type="GO" id="GO:0009791">
    <property type="term" value="P:post-embryonic development"/>
    <property type="evidence" value="ECO:0007669"/>
    <property type="project" value="Ensembl"/>
</dbReference>
<dbReference type="GO" id="GO:0019678">
    <property type="term" value="P:propionate metabolic process, methylmalonyl pathway"/>
    <property type="evidence" value="ECO:0000318"/>
    <property type="project" value="GO_Central"/>
</dbReference>
<dbReference type="GO" id="GO:1901290">
    <property type="term" value="P:succinyl-CoA biosynthetic process"/>
    <property type="evidence" value="ECO:0007669"/>
    <property type="project" value="Ensembl"/>
</dbReference>
<dbReference type="CDD" id="cd02071">
    <property type="entry name" value="MM_CoA_mut_B12_BD"/>
    <property type="match status" value="1"/>
</dbReference>
<dbReference type="CDD" id="cd03679">
    <property type="entry name" value="MM_CoA_mutase_alpha_like"/>
    <property type="match status" value="1"/>
</dbReference>
<dbReference type="FunFam" id="3.20.20.240:FF:000002">
    <property type="entry name" value="Methylmalonyl-CoA mutase, mitochondrial"/>
    <property type="match status" value="1"/>
</dbReference>
<dbReference type="FunFam" id="3.40.50.280:FF:000002">
    <property type="entry name" value="Methylmalonyl-CoA mutase, mitochondrial"/>
    <property type="match status" value="1"/>
</dbReference>
<dbReference type="Gene3D" id="3.40.50.280">
    <property type="entry name" value="Cobalamin-binding domain"/>
    <property type="match status" value="1"/>
</dbReference>
<dbReference type="Gene3D" id="3.20.20.240">
    <property type="entry name" value="Methylmalonyl-CoA mutase"/>
    <property type="match status" value="1"/>
</dbReference>
<dbReference type="InterPro" id="IPR006159">
    <property type="entry name" value="Acid_CoA_mut_C"/>
</dbReference>
<dbReference type="InterPro" id="IPR016176">
    <property type="entry name" value="Cbl-dep_enz_cat"/>
</dbReference>
<dbReference type="InterPro" id="IPR006158">
    <property type="entry name" value="Cobalamin-bd"/>
</dbReference>
<dbReference type="InterPro" id="IPR036724">
    <property type="entry name" value="Cobalamin-bd_sf"/>
</dbReference>
<dbReference type="InterPro" id="IPR006099">
    <property type="entry name" value="MeMalonylCoA_mutase_a/b_cat"/>
</dbReference>
<dbReference type="InterPro" id="IPR006098">
    <property type="entry name" value="MMCoA_mutase_a_cat"/>
</dbReference>
<dbReference type="NCBIfam" id="TIGR00640">
    <property type="entry name" value="acid_CoA_mut_C"/>
    <property type="match status" value="1"/>
</dbReference>
<dbReference type="NCBIfam" id="TIGR00641">
    <property type="entry name" value="acid_CoA_mut_N"/>
    <property type="match status" value="1"/>
</dbReference>
<dbReference type="NCBIfam" id="NF006944">
    <property type="entry name" value="PRK09426.1"/>
    <property type="match status" value="1"/>
</dbReference>
<dbReference type="PANTHER" id="PTHR48101:SF4">
    <property type="entry name" value="METHYLMALONYL-COA MUTASE, MITOCHONDRIAL"/>
    <property type="match status" value="1"/>
</dbReference>
<dbReference type="PANTHER" id="PTHR48101">
    <property type="entry name" value="METHYLMALONYL-COA MUTASE, MITOCHONDRIAL-RELATED"/>
    <property type="match status" value="1"/>
</dbReference>
<dbReference type="Pfam" id="PF02310">
    <property type="entry name" value="B12-binding"/>
    <property type="match status" value="1"/>
</dbReference>
<dbReference type="Pfam" id="PF01642">
    <property type="entry name" value="MM_CoA_mutase"/>
    <property type="match status" value="1"/>
</dbReference>
<dbReference type="SUPFAM" id="SSF52242">
    <property type="entry name" value="Cobalamin (vitamin B12)-binding domain"/>
    <property type="match status" value="1"/>
</dbReference>
<dbReference type="SUPFAM" id="SSF51703">
    <property type="entry name" value="Cobalamin (vitamin B12)-dependent enzymes"/>
    <property type="match status" value="1"/>
</dbReference>
<dbReference type="PROSITE" id="PS51332">
    <property type="entry name" value="B12_BINDING"/>
    <property type="match status" value="1"/>
</dbReference>
<dbReference type="PROSITE" id="PS00544">
    <property type="entry name" value="METMALONYL_COA_MUTASE"/>
    <property type="match status" value="1"/>
</dbReference>
<gene>
    <name evidence="40" type="primary">MMUT</name>
    <name evidence="40" type="synonym">MUT</name>
</gene>
<keyword id="KW-0002">3D-structure</keyword>
<keyword id="KW-0007">Acetylation</keyword>
<keyword id="KW-0846">Cobalamin</keyword>
<keyword id="KW-0170">Cobalt</keyword>
<keyword id="KW-0963">Cytoplasm</keyword>
<keyword id="KW-0903">Direct protein sequencing</keyword>
<keyword id="KW-0225">Disease variant</keyword>
<keyword id="KW-0413">Isomerase</keyword>
<keyword id="KW-0479">Metal-binding</keyword>
<keyword id="KW-0496">Mitochondrion</keyword>
<keyword id="KW-0597">Phosphoprotein</keyword>
<keyword id="KW-1267">Proteomics identification</keyword>
<keyword id="KW-1185">Reference proteome</keyword>
<keyword id="KW-0809">Transit peptide</keyword>